<proteinExistence type="evidence at protein level"/>
<feature type="signal peptide" evidence="2">
    <location>
        <begin position="1"/>
        <end position="21"/>
    </location>
</feature>
<feature type="chain" id="PRO_0000005109" description="Stromal cell-derived factor 1">
    <location>
        <begin position="22"/>
        <end position="93"/>
    </location>
</feature>
<feature type="chain" id="PRO_0000005110" description="SDF-1-beta(3-72)">
    <location>
        <begin position="24"/>
        <end position="93"/>
    </location>
</feature>
<feature type="chain" id="PRO_0000005111" description="SDF-1-alpha(3-67)">
    <location>
        <begin position="24"/>
        <end position="88"/>
    </location>
</feature>
<feature type="region of interest" description="Receptor and heparin binding" evidence="32">
    <location>
        <begin position="29"/>
        <end position="33"/>
    </location>
</feature>
<feature type="region of interest" description="Receptor binding">
    <location>
        <begin position="39"/>
        <end position="41"/>
    </location>
</feature>
<feature type="region of interest" description="Receptor binding">
    <location>
        <begin position="48"/>
        <end position="50"/>
    </location>
</feature>
<feature type="region of interest" description="Receptor binding">
    <location>
        <begin position="60"/>
        <end position="70"/>
    </location>
</feature>
<feature type="short sequence motif" description="Receptor activation motif">
    <location>
        <begin position="22"/>
        <end position="23"/>
    </location>
</feature>
<feature type="binding site">
    <location>
        <begin position="41"/>
        <end position="51"/>
    </location>
    <ligand>
        <name>heparin</name>
        <dbReference type="ChEBI" id="CHEBI:28304"/>
    </ligand>
</feature>
<feature type="binding site">
    <location>
        <position position="62"/>
    </location>
    <ligand>
        <name>heparin</name>
        <dbReference type="ChEBI" id="CHEBI:28304"/>
    </ligand>
</feature>
<feature type="binding site">
    <location>
        <position position="69"/>
    </location>
    <ligand>
        <name>heparin</name>
        <dbReference type="ChEBI" id="CHEBI:28304"/>
    </ligand>
</feature>
<feature type="binding site">
    <location>
        <position position="85"/>
    </location>
    <ligand>
        <name>heparin</name>
        <dbReference type="ChEBI" id="CHEBI:28304"/>
    </ligand>
</feature>
<feature type="site" description="Important for integrin interaction and activation" evidence="19">
    <location>
        <position position="45"/>
    </location>
</feature>
<feature type="site" description="Important for dimer formation">
    <location>
        <position position="46"/>
    </location>
</feature>
<feature type="site" description="Important for integrin interaction and activation" evidence="19">
    <location>
        <position position="48"/>
    </location>
</feature>
<feature type="site" description="Important for integrin interaction and activation" evidence="19">
    <location>
        <position position="64"/>
    </location>
</feature>
<feature type="disulfide bond">
    <location>
        <begin position="30"/>
        <end position="55"/>
    </location>
</feature>
<feature type="disulfide bond">
    <location>
        <begin position="32"/>
        <end position="71"/>
    </location>
</feature>
<feature type="splice variant" id="VSP_054781" description="In isoform 7." evidence="25">
    <original>VARANVKHLKILNTPNCALQIVARLKNNNRQVCIDPKLKWIQEYLEKALNKRFKM</original>
    <variation>YCTCLIRVSFHGATPLTQGSWVLYSLSCAGGETGLREPGPMVSPRVESHQEGRLGVPGPVNLGKA</variation>
    <location>
        <begin position="39"/>
        <end position="93"/>
    </location>
</feature>
<feature type="splice variant" id="VSP_042118" description="In isoform Delta." evidence="26">
    <original>KRFKM</original>
    <variation>NLISAAPAGKRVIAGARALHPSPPRACPTARALCEIRLWPPPEWSWPSPGDV</variation>
    <location>
        <begin position="89"/>
        <end position="93"/>
    </location>
</feature>
<feature type="splice variant" id="VSP_042119" description="In isoform Epsilon." evidence="26">
    <original>KRFKM</original>
    <variation>NC</variation>
    <location>
        <begin position="89"/>
        <end position="93"/>
    </location>
</feature>
<feature type="splice variant" id="VSP_001056" description="In isoform Alpha." evidence="23 24 27 28 30 31">
    <location>
        <begin position="90"/>
        <end position="93"/>
    </location>
</feature>
<feature type="splice variant" id="VSP_041209" description="In isoform Gamma." evidence="26 29">
    <original>RFKM</original>
    <variation>GRREEKVGKKEKIGKKKRQKKRKAAQKRKN</variation>
    <location>
        <begin position="90"/>
        <end position="93"/>
    </location>
</feature>
<feature type="splice variant" id="VSP_042120" description="In isoform Theta." evidence="26">
    <original>RFKM</original>
    <variation>IWLYGNAETSR</variation>
    <location>
        <begin position="90"/>
        <end position="93"/>
    </location>
</feature>
<feature type="mutagenesis site" description="Abolished CXCR4 activation ability, but only slightly impaired binding to the receptor." evidence="21">
    <location>
        <begin position="22"/>
        <end position="23"/>
    </location>
</feature>
<feature type="mutagenesis site" description="Loss of chemotactic activity." evidence="13 21">
    <original>K</original>
    <variation>A</variation>
    <location>
        <position position="22"/>
    </location>
</feature>
<feature type="mutagenesis site" description="Abolished CXCR4 activation ability, but only slightly impaired binding to the receptor." evidence="13 21">
    <original>K</original>
    <variation>R</variation>
    <location>
        <position position="22"/>
    </location>
</feature>
<feature type="mutagenesis site" description="Abolished CXCR4 activation ability, but only slightly impaired binding to the receptor." evidence="13 21">
    <location>
        <position position="22"/>
    </location>
</feature>
<feature type="mutagenesis site" description="Abolished CXCR4 activation ability, but only slightly impaired binding to the receptor." evidence="21">
    <original>P</original>
    <variation>G</variation>
    <location>
        <position position="23"/>
    </location>
</feature>
<feature type="mutagenesis site" description="Significantly impaired CXCR4 activation ability, but only slightly impaired binding to the receptor." evidence="21">
    <original>SLS</original>
    <variation>AQA</variation>
    <location>
        <begin position="25"/>
        <end position="27"/>
    </location>
</feature>
<feature type="mutagenesis site" description="Impaired CXCR4 activation ability, but only slightly impaired binding to the receptor." evidence="21">
    <original>Y</original>
    <variation>A</variation>
    <location>
        <position position="28"/>
    </location>
</feature>
<feature type="mutagenesis site" description="No significant effect on CXCR4 binding or activation." evidence="21">
    <original>Y</original>
    <variation>H</variation>
    <location>
        <position position="28"/>
    </location>
</feature>
<feature type="mutagenesis site" description="Slightly impaired binding and activation of CXCR4." evidence="12 21">
    <original>R</original>
    <variation>K</variation>
    <location>
        <position position="29"/>
    </location>
</feature>
<feature type="mutagenesis site" description="Greatly impaired chemotactic activity and enhanced inhibition by heparin." evidence="12 21">
    <original>R</original>
    <variation>Q</variation>
    <location>
        <position position="29"/>
    </location>
</feature>
<feature type="mutagenesis site" description="Significantly decreased chemotactic activity." evidence="4">
    <original>RFFESH</original>
    <variation>AAAAAA</variation>
    <location>
        <begin position="33"/>
        <end position="38"/>
    </location>
</feature>
<feature type="mutagenesis site" description="Significantly decreased anti-HIV-1 and chemotactic activities." evidence="4 12">
    <original>R</original>
    <variation>A</variation>
    <location>
        <position position="33"/>
    </location>
</feature>
<feature type="mutagenesis site" description="Slightly impaired chemotactic activity and enhanced inhibition by heparin. Greatly impaired chemotactic activity; when associated with Q-29." evidence="4 12">
    <original>R</original>
    <variation>Q</variation>
    <location>
        <position position="33"/>
    </location>
</feature>
<feature type="mutagenesis site" description="No effect on anti-HIV-1 and chemotactic activities. Slightly impaired chemotactic activity and no effect on inhibition by heparin; when associated with A-35." evidence="4">
    <original>F</original>
    <variation>A</variation>
    <location>
        <position position="34"/>
    </location>
</feature>
<feature type="mutagenesis site" description="No effect on anti-HIV-1 and chemotactic activities. Slightly impaired chemotactic activity and no effect on inhibition by heparin; when associated with A-34." evidence="4">
    <original>F</original>
    <variation>A</variation>
    <location>
        <position position="35"/>
    </location>
</feature>
<feature type="mutagenesis site" description="Slightly impaired chemotactic activity, no effect on inhibition by heparin." evidence="12">
    <original>ESH</original>
    <variation>QSN</variation>
    <location>
        <begin position="36"/>
        <end position="38"/>
    </location>
</feature>
<feature type="mutagenesis site" description="No effect on anti-HIV-1 and chemotactic activities." evidence="4">
    <original>E</original>
    <variation>A</variation>
    <location>
        <position position="36"/>
    </location>
</feature>
<feature type="mutagenesis site" description="No effect on anti-HIV-1 and chemotactic activities." evidence="4">
    <original>S</original>
    <variation>A</variation>
    <location>
        <position position="37"/>
    </location>
</feature>
<feature type="mutagenesis site" description="No effect on anti-HIV-1 and chemotactic activities." evidence="4">
    <original>H</original>
    <variation>A</variation>
    <location>
        <position position="38"/>
    </location>
</feature>
<feature type="mutagenesis site" description="No effect on CXCR4 activation." evidence="14">
    <original>R</original>
    <variation>A</variation>
    <location>
        <position position="41"/>
    </location>
</feature>
<feature type="mutagenesis site" description="Loss of heparin-binding capacity." evidence="3">
    <original>KHLK</original>
    <variation>SSLS</variation>
    <location>
        <begin position="45"/>
        <end position="48"/>
    </location>
</feature>
<feature type="mutagenesis site" description="Loss of integrin activation; when associated with E-48 or E-64." evidence="19">
    <original>K</original>
    <variation>E</variation>
    <location>
        <position position="45"/>
    </location>
</feature>
<feature type="mutagenesis site" description="55-fold reduction in binding affinity for Link domain of TNFAIP6; when associated with S-46 and S-48." evidence="18">
    <original>K</original>
    <variation>S</variation>
    <location>
        <position position="45"/>
    </location>
</feature>
<feature type="mutagenesis site" description="Reduced dimerization in neutral pH. Eliminates the pH dependence of dimerization." evidence="8 12 14">
    <original>H</original>
    <variation>A</variation>
    <location>
        <position position="46"/>
    </location>
</feature>
<feature type="mutagenesis site" description="No significant effect on dimerization in neutral pH. Eliminates the pH dependence of dimerization." evidence="8 12 14">
    <original>H</original>
    <variation>L</variation>
    <location>
        <position position="46"/>
    </location>
</feature>
<feature type="mutagenesis site" description="Slightly impaired CXCR4 activation and clear resistance to inhibition by heparin; when associated with Q-48; Q-62; Q-68 and N-69." evidence="8 12 14">
    <original>H</original>
    <variation>N</variation>
    <location>
        <position position="46"/>
    </location>
</feature>
<feature type="mutagenesis site" description="No effect on CXCR4 activation. Impaired dimer formation, leading to increased chemotactic activity. Eliminates the pH dependence of dimerization." evidence="8 12 14">
    <original>H</original>
    <variation>R</variation>
    <location>
        <position position="46"/>
    </location>
</feature>
<feature type="mutagenesis site" description="55-fold reduction in binding affinity for Link domain of TNFAIP6; when associated with S-45 and S-48." evidence="18">
    <original>H</original>
    <variation>S</variation>
    <location>
        <position position="46"/>
    </location>
</feature>
<feature type="mutagenesis site" description="Impaired CXCR4 activation." evidence="12 14">
    <original>K</original>
    <variation>A</variation>
    <location>
        <position position="48"/>
    </location>
</feature>
<feature type="mutagenesis site" description="Impaired CXCR4 activation. Loss of integrin activation; when associated with E-45 or E-64." evidence="12 14 19">
    <original>K</original>
    <variation>E</variation>
    <location>
        <position position="48"/>
    </location>
</feature>
<feature type="mutagenesis site" description="Slightly impaired CXCR4 activation and clear resistance to inhibition by heparin; when associated with N-46; Q-62; Q-68 and N-69." evidence="12 14">
    <original>K</original>
    <variation>Q</variation>
    <location>
        <position position="48"/>
    </location>
</feature>
<feature type="mutagenesis site" description="55-fold reduction in binding affinity for Link domain of TNFAIP6; when associated with S-45 and S-46." evidence="18">
    <original>K</original>
    <variation>S</variation>
    <location>
        <position position="48"/>
    </location>
</feature>
<feature type="mutagenesis site" description="Slightly impaired chemotactic activity, no effect on inhibition by heparin." evidence="12">
    <original>TPNCA</original>
    <variation>GPGCG</variation>
    <location>
        <begin position="52"/>
        <end position="56"/>
    </location>
</feature>
<feature type="mutagenesis site" description="Formation of an intermolecular disulfide bond, leading to a locked dimer; when associated with C-86. No effect on CXCR4 activation, but loss of chemotactic activity; when associated with C-86.">
    <original>L</original>
    <variation>C</variation>
    <location>
        <position position="57"/>
    </location>
</feature>
<feature type="mutagenesis site" description="Impaired CXCR4 activation." evidence="14">
    <original>V</original>
    <variation>A</variation>
    <location>
        <position position="60"/>
    </location>
</feature>
<feature type="mutagenesis site" description="No effect on CXCR4 activation." evidence="12 14">
    <original>R</original>
    <variation>A</variation>
    <location>
        <position position="62"/>
    </location>
</feature>
<feature type="mutagenesis site" description="Slightly impaired CXCR4 activation and clear resistance to inhibition by heparin; when associated with N-46; Q-48; Q-68 and N-69." evidence="12 14">
    <original>R</original>
    <variation>Q</variation>
    <location>
        <position position="62"/>
    </location>
</feature>
<feature type="mutagenesis site" description="Loss of integrin activation; when associated with E-45 or E-48." evidence="19">
    <original>K</original>
    <variation>E</variation>
    <location>
        <position position="64"/>
    </location>
</feature>
<feature type="mutagenesis site" description="Impaired CXCR4 activation." evidence="12 14">
    <original>R</original>
    <variation>A</variation>
    <location>
        <position position="68"/>
    </location>
</feature>
<feature type="mutagenesis site" description="Greatly impaired CXCR4 activation." evidence="12 14">
    <original>R</original>
    <variation>E</variation>
    <location>
        <position position="68"/>
    </location>
</feature>
<feature type="mutagenesis site" description="Slightly impaired CXCR4 activation and clear resistance to inhibition by heparin; when associated with N-46; Q-48; Q-62 and N-69." evidence="12 14">
    <original>R</original>
    <variation>Q</variation>
    <location>
        <position position="68"/>
    </location>
</feature>
<feature type="mutagenesis site" description="Slightly impaired CXCR4 activation and clear resistance to inhibition by heparin; when associated with N-46; Q-48; Q-62 and Q-68." evidence="12">
    <original>Q</original>
    <variation>N</variation>
    <location>
        <position position="69"/>
    </location>
</feature>
<feature type="mutagenesis site" description="Impaired CXCR4 activation." evidence="14">
    <original>V</original>
    <variation>A</variation>
    <location>
        <position position="70"/>
    </location>
</feature>
<feature type="mutagenesis site" description="No effect on CXCR4 activation." evidence="14">
    <original>E</original>
    <variation>A</variation>
    <location>
        <position position="81"/>
    </location>
</feature>
<feature type="mutagenesis site" description="No effect on CXCR4 activation." evidence="14">
    <original>E</original>
    <variation>A</variation>
    <location>
        <position position="84"/>
    </location>
</feature>
<feature type="mutagenesis site" description="No effect on CXCR4 activation." evidence="14">
    <original>K</original>
    <variation>A</variation>
    <location>
        <position position="85"/>
    </location>
</feature>
<feature type="mutagenesis site" description="Formation of an intermolecular disulfide bond, leading to a locked dimer; when associated with C-57. No effect on CXCR4 activation, but loss of chemotactic activity; when associated with C-57.">
    <original>A</original>
    <variation>C</variation>
    <location>
        <position position="86"/>
    </location>
</feature>
<feature type="helix" evidence="38">
    <location>
        <begin position="24"/>
        <end position="26"/>
    </location>
</feature>
<feature type="strand" evidence="35">
    <location>
        <begin position="27"/>
        <end position="29"/>
    </location>
</feature>
<feature type="strand" evidence="37">
    <location>
        <begin position="31"/>
        <end position="34"/>
    </location>
</feature>
<feature type="strand" evidence="34">
    <location>
        <begin position="36"/>
        <end position="38"/>
    </location>
</feature>
<feature type="helix" evidence="36">
    <location>
        <begin position="41"/>
        <end position="43"/>
    </location>
</feature>
<feature type="strand" evidence="36">
    <location>
        <begin position="44"/>
        <end position="49"/>
    </location>
</feature>
<feature type="turn" evidence="33">
    <location>
        <begin position="53"/>
        <end position="55"/>
    </location>
</feature>
<feature type="strand" evidence="36">
    <location>
        <begin position="59"/>
        <end position="63"/>
    </location>
</feature>
<feature type="turn" evidence="36">
    <location>
        <begin position="64"/>
        <end position="66"/>
    </location>
</feature>
<feature type="strand" evidence="36">
    <location>
        <begin position="69"/>
        <end position="72"/>
    </location>
</feature>
<feature type="helix" evidence="36">
    <location>
        <begin position="79"/>
        <end position="86"/>
    </location>
</feature>
<reference key="1">
    <citation type="journal article" date="1995" name="Genomics">
        <title>Structure and chromosomal localization of the human stromal cell-derived factor 1 (SDF1) gene.</title>
        <authorList>
            <person name="Shirozu M."/>
            <person name="Nakano T."/>
            <person name="Inazawa J."/>
            <person name="Tashiro K."/>
            <person name="Tada H."/>
            <person name="Shinohara T."/>
            <person name="Honjo T."/>
        </authorList>
    </citation>
    <scope>NUCLEOTIDE SEQUENCE [MRNA] (ISOFORMS ALPHA AND BETA)</scope>
</reference>
<reference key="2">
    <citation type="journal article" date="2006" name="Gene">
        <title>Identification and expression of novel isoforms of human stromal cell-derived factor 1.</title>
        <authorList>
            <person name="Yu L."/>
            <person name="Cecil J."/>
            <person name="Peng S.B."/>
            <person name="Schrementi J."/>
            <person name="Kovacevic S."/>
            <person name="Paul D."/>
            <person name="Su E.W."/>
            <person name="Wang J."/>
        </authorList>
    </citation>
    <scope>NUCLEOTIDE SEQUENCE [MRNA] (ISOFORMS GAMMA; DELTA; EPSILON AND THETA)</scope>
    <scope>TISSUE SPECIFICITY</scope>
    <scope>DEVELOPMENTAL STAGE</scope>
    <scope>ALTERNATIVE SPLICING</scope>
    <source>
        <tissue>Fetal brain</tissue>
        <tissue>Fetal heart</tissue>
        <tissue>Heart</tissue>
    </source>
</reference>
<reference key="3">
    <citation type="submission" date="1994-10" db="EMBL/GenBank/DDBJ databases">
        <authorList>
            <person name="Spotila L.D."/>
        </authorList>
    </citation>
    <scope>NUCLEOTIDE SEQUENCE [MRNA] (ISOFORM BETA)</scope>
    <source>
        <tissue>Fibroblast</tissue>
    </source>
</reference>
<reference key="4">
    <citation type="submission" date="1995-01" db="EMBL/GenBank/DDBJ databases">
        <title>Nucleotide sequence of hIRH, human intercrine reduced in hepatomas.</title>
        <authorList>
            <person name="Begum N.A."/>
            <person name="Barnard G.F."/>
        </authorList>
    </citation>
    <scope>NUCLEOTIDE SEQUENCE [MRNA] (ISOFORM ALPHA)</scope>
    <source>
        <tissue>Liver</tissue>
    </source>
</reference>
<reference key="5">
    <citation type="submission" date="2004-06" db="EMBL/GenBank/DDBJ databases">
        <title>Inhibition of X4 and R5 HIV-1 by human SDF-1g, a novel chemokine that interferes with HIV transcription.</title>
        <authorList>
            <person name="Callebaut C."/>
            <person name="Verdin E."/>
        </authorList>
    </citation>
    <scope>NUCLEOTIDE SEQUENCE [MRNA] (ISOFORM GAMMA)</scope>
</reference>
<reference key="6">
    <citation type="submission" date="2004-12" db="EMBL/GenBank/DDBJ databases">
        <title>Polymorphism study of cell-derived factor 1 (SDF1) gene and their correlation with HIV infection in a Chinese cohort.</title>
        <authorList>
            <person name="Zhao X."/>
            <person name="Zhang H."/>
            <person name="Lee S."/>
            <person name="Wong K."/>
            <person name="Zheng B."/>
        </authorList>
    </citation>
    <scope>NUCLEOTIDE SEQUENCE [MRNA] (ISOFORM ALPHA)</scope>
</reference>
<reference key="7">
    <citation type="submission" date="2004-05" db="EMBL/GenBank/DDBJ databases">
        <title>Cloning of human full open reading frames in Gateway(TM) system entry vector (pDONR201).</title>
        <authorList>
            <person name="Ebert L."/>
            <person name="Schick M."/>
            <person name="Neubert P."/>
            <person name="Schatten R."/>
            <person name="Henze S."/>
            <person name="Korn B."/>
        </authorList>
    </citation>
    <scope>NUCLEOTIDE SEQUENCE [LARGE SCALE MRNA] (ISOFORM ALPHA)</scope>
</reference>
<reference key="8">
    <citation type="journal article" date="2004" name="Nat. Genet.">
        <title>Complete sequencing and characterization of 21,243 full-length human cDNAs.</title>
        <authorList>
            <person name="Ota T."/>
            <person name="Suzuki Y."/>
            <person name="Nishikawa T."/>
            <person name="Otsuki T."/>
            <person name="Sugiyama T."/>
            <person name="Irie R."/>
            <person name="Wakamatsu A."/>
            <person name="Hayashi K."/>
            <person name="Sato H."/>
            <person name="Nagai K."/>
            <person name="Kimura K."/>
            <person name="Makita H."/>
            <person name="Sekine M."/>
            <person name="Obayashi M."/>
            <person name="Nishi T."/>
            <person name="Shibahara T."/>
            <person name="Tanaka T."/>
            <person name="Ishii S."/>
            <person name="Yamamoto J."/>
            <person name="Saito K."/>
            <person name="Kawai Y."/>
            <person name="Isono Y."/>
            <person name="Nakamura Y."/>
            <person name="Nagahari K."/>
            <person name="Murakami K."/>
            <person name="Yasuda T."/>
            <person name="Iwayanagi T."/>
            <person name="Wagatsuma M."/>
            <person name="Shiratori A."/>
            <person name="Sudo H."/>
            <person name="Hosoiri T."/>
            <person name="Kaku Y."/>
            <person name="Kodaira H."/>
            <person name="Kondo H."/>
            <person name="Sugawara M."/>
            <person name="Takahashi M."/>
            <person name="Kanda K."/>
            <person name="Yokoi T."/>
            <person name="Furuya T."/>
            <person name="Kikkawa E."/>
            <person name="Omura Y."/>
            <person name="Abe K."/>
            <person name="Kamihara K."/>
            <person name="Katsuta N."/>
            <person name="Sato K."/>
            <person name="Tanikawa M."/>
            <person name="Yamazaki M."/>
            <person name="Ninomiya K."/>
            <person name="Ishibashi T."/>
            <person name="Yamashita H."/>
            <person name="Murakawa K."/>
            <person name="Fujimori K."/>
            <person name="Tanai H."/>
            <person name="Kimata M."/>
            <person name="Watanabe M."/>
            <person name="Hiraoka S."/>
            <person name="Chiba Y."/>
            <person name="Ishida S."/>
            <person name="Ono Y."/>
            <person name="Takiguchi S."/>
            <person name="Watanabe S."/>
            <person name="Yosida M."/>
            <person name="Hotuta T."/>
            <person name="Kusano J."/>
            <person name="Kanehori K."/>
            <person name="Takahashi-Fujii A."/>
            <person name="Hara H."/>
            <person name="Tanase T.-O."/>
            <person name="Nomura Y."/>
            <person name="Togiya S."/>
            <person name="Komai F."/>
            <person name="Hara R."/>
            <person name="Takeuchi K."/>
            <person name="Arita M."/>
            <person name="Imose N."/>
            <person name="Musashino K."/>
            <person name="Yuuki H."/>
            <person name="Oshima A."/>
            <person name="Sasaki N."/>
            <person name="Aotsuka S."/>
            <person name="Yoshikawa Y."/>
            <person name="Matsunawa H."/>
            <person name="Ichihara T."/>
            <person name="Shiohata N."/>
            <person name="Sano S."/>
            <person name="Moriya S."/>
            <person name="Momiyama H."/>
            <person name="Satoh N."/>
            <person name="Takami S."/>
            <person name="Terashima Y."/>
            <person name="Suzuki O."/>
            <person name="Nakagawa S."/>
            <person name="Senoh A."/>
            <person name="Mizoguchi H."/>
            <person name="Goto Y."/>
            <person name="Shimizu F."/>
            <person name="Wakebe H."/>
            <person name="Hishigaki H."/>
            <person name="Watanabe T."/>
            <person name="Sugiyama A."/>
            <person name="Takemoto M."/>
            <person name="Kawakami B."/>
            <person name="Yamazaki M."/>
            <person name="Watanabe K."/>
            <person name="Kumagai A."/>
            <person name="Itakura S."/>
            <person name="Fukuzumi Y."/>
            <person name="Fujimori Y."/>
            <person name="Komiyama M."/>
            <person name="Tashiro H."/>
            <person name="Tanigami A."/>
            <person name="Fujiwara T."/>
            <person name="Ono T."/>
            <person name="Yamada K."/>
            <person name="Fujii Y."/>
            <person name="Ozaki K."/>
            <person name="Hirao M."/>
            <person name="Ohmori Y."/>
            <person name="Kawabata A."/>
            <person name="Hikiji T."/>
            <person name="Kobatake N."/>
            <person name="Inagaki H."/>
            <person name="Ikema Y."/>
            <person name="Okamoto S."/>
            <person name="Okitani R."/>
            <person name="Kawakami T."/>
            <person name="Noguchi S."/>
            <person name="Itoh T."/>
            <person name="Shigeta K."/>
            <person name="Senba T."/>
            <person name="Matsumura K."/>
            <person name="Nakajima Y."/>
            <person name="Mizuno T."/>
            <person name="Morinaga M."/>
            <person name="Sasaki M."/>
            <person name="Togashi T."/>
            <person name="Oyama M."/>
            <person name="Hata H."/>
            <person name="Watanabe M."/>
            <person name="Komatsu T."/>
            <person name="Mizushima-Sugano J."/>
            <person name="Satoh T."/>
            <person name="Shirai Y."/>
            <person name="Takahashi Y."/>
            <person name="Nakagawa K."/>
            <person name="Okumura K."/>
            <person name="Nagase T."/>
            <person name="Nomura N."/>
            <person name="Kikuchi H."/>
            <person name="Masuho Y."/>
            <person name="Yamashita R."/>
            <person name="Nakai K."/>
            <person name="Yada T."/>
            <person name="Nakamura Y."/>
            <person name="Ohara O."/>
            <person name="Isogai T."/>
            <person name="Sugano S."/>
        </authorList>
    </citation>
    <scope>NUCLEOTIDE SEQUENCE [LARGE SCALE MRNA] (ISOFORMS ALPHA AND BETA)</scope>
    <source>
        <tissue>Thymus</tissue>
        <tissue>Uterus</tissue>
    </source>
</reference>
<reference key="9">
    <citation type="journal article" date="2006" name="Genome Res.">
        <title>Diversification of transcriptional modulation: large-scale identification and characterization of putative alternative promoters of human genes.</title>
        <authorList>
            <person name="Kimura K."/>
            <person name="Wakamatsu A."/>
            <person name="Suzuki Y."/>
            <person name="Ota T."/>
            <person name="Nishikawa T."/>
            <person name="Yamashita R."/>
            <person name="Yamamoto J."/>
            <person name="Sekine M."/>
            <person name="Tsuritani K."/>
            <person name="Wakaguri H."/>
            <person name="Ishii S."/>
            <person name="Sugiyama T."/>
            <person name="Saito K."/>
            <person name="Isono Y."/>
            <person name="Irie R."/>
            <person name="Kushida N."/>
            <person name="Yoneyama T."/>
            <person name="Otsuka R."/>
            <person name="Kanda K."/>
            <person name="Yokoi T."/>
            <person name="Kondo H."/>
            <person name="Wagatsuma M."/>
            <person name="Murakawa K."/>
            <person name="Ishida S."/>
            <person name="Ishibashi T."/>
            <person name="Takahashi-Fujii A."/>
            <person name="Tanase T."/>
            <person name="Nagai K."/>
            <person name="Kikuchi H."/>
            <person name="Nakai K."/>
            <person name="Isogai T."/>
            <person name="Sugano S."/>
        </authorList>
    </citation>
    <scope>NUCLEOTIDE SEQUENCE [LARGE SCALE MRNA] (ISOFORM 7)</scope>
</reference>
<reference key="10">
    <citation type="submission" date="2004-10" db="EMBL/GenBank/DDBJ databases">
        <authorList>
            <consortium name="SeattleSNPs variation discovery resource"/>
        </authorList>
    </citation>
    <scope>NUCLEOTIDE SEQUENCE [GENOMIC DNA]</scope>
</reference>
<reference key="11">
    <citation type="journal article" date="2004" name="Nature">
        <title>The DNA sequence and comparative analysis of human chromosome 10.</title>
        <authorList>
            <person name="Deloukas P."/>
            <person name="Earthrowl M.E."/>
            <person name="Grafham D.V."/>
            <person name="Rubenfield M."/>
            <person name="French L."/>
            <person name="Steward C.A."/>
            <person name="Sims S.K."/>
            <person name="Jones M.C."/>
            <person name="Searle S."/>
            <person name="Scott C."/>
            <person name="Howe K."/>
            <person name="Hunt S.E."/>
            <person name="Andrews T.D."/>
            <person name="Gilbert J.G.R."/>
            <person name="Swarbreck D."/>
            <person name="Ashurst J.L."/>
            <person name="Taylor A."/>
            <person name="Battles J."/>
            <person name="Bird C.P."/>
            <person name="Ainscough R."/>
            <person name="Almeida J.P."/>
            <person name="Ashwell R.I.S."/>
            <person name="Ambrose K.D."/>
            <person name="Babbage A.K."/>
            <person name="Bagguley C.L."/>
            <person name="Bailey J."/>
            <person name="Banerjee R."/>
            <person name="Bates K."/>
            <person name="Beasley H."/>
            <person name="Bray-Allen S."/>
            <person name="Brown A.J."/>
            <person name="Brown J.Y."/>
            <person name="Burford D.C."/>
            <person name="Burrill W."/>
            <person name="Burton J."/>
            <person name="Cahill P."/>
            <person name="Camire D."/>
            <person name="Carter N.P."/>
            <person name="Chapman J.C."/>
            <person name="Clark S.Y."/>
            <person name="Clarke G."/>
            <person name="Clee C.M."/>
            <person name="Clegg S."/>
            <person name="Corby N."/>
            <person name="Coulson A."/>
            <person name="Dhami P."/>
            <person name="Dutta I."/>
            <person name="Dunn M."/>
            <person name="Faulkner L."/>
            <person name="Frankish A."/>
            <person name="Frankland J.A."/>
            <person name="Garner P."/>
            <person name="Garnett J."/>
            <person name="Gribble S."/>
            <person name="Griffiths C."/>
            <person name="Grocock R."/>
            <person name="Gustafson E."/>
            <person name="Hammond S."/>
            <person name="Harley J.L."/>
            <person name="Hart E."/>
            <person name="Heath P.D."/>
            <person name="Ho T.P."/>
            <person name="Hopkins B."/>
            <person name="Horne J."/>
            <person name="Howden P.J."/>
            <person name="Huckle E."/>
            <person name="Hynds C."/>
            <person name="Johnson C."/>
            <person name="Johnson D."/>
            <person name="Kana A."/>
            <person name="Kay M."/>
            <person name="Kimberley A.M."/>
            <person name="Kershaw J.K."/>
            <person name="Kokkinaki M."/>
            <person name="Laird G.K."/>
            <person name="Lawlor S."/>
            <person name="Lee H.M."/>
            <person name="Leongamornlert D.A."/>
            <person name="Laird G."/>
            <person name="Lloyd C."/>
            <person name="Lloyd D.M."/>
            <person name="Loveland J."/>
            <person name="Lovell J."/>
            <person name="McLaren S."/>
            <person name="McLay K.E."/>
            <person name="McMurray A."/>
            <person name="Mashreghi-Mohammadi M."/>
            <person name="Matthews L."/>
            <person name="Milne S."/>
            <person name="Nickerson T."/>
            <person name="Nguyen M."/>
            <person name="Overton-Larty E."/>
            <person name="Palmer S.A."/>
            <person name="Pearce A.V."/>
            <person name="Peck A.I."/>
            <person name="Pelan S."/>
            <person name="Phillimore B."/>
            <person name="Porter K."/>
            <person name="Rice C.M."/>
            <person name="Rogosin A."/>
            <person name="Ross M.T."/>
            <person name="Sarafidou T."/>
            <person name="Sehra H.K."/>
            <person name="Shownkeen R."/>
            <person name="Skuce C.D."/>
            <person name="Smith M."/>
            <person name="Standring L."/>
            <person name="Sycamore N."/>
            <person name="Tester J."/>
            <person name="Thorpe A."/>
            <person name="Torcasso W."/>
            <person name="Tracey A."/>
            <person name="Tromans A."/>
            <person name="Tsolas J."/>
            <person name="Wall M."/>
            <person name="Walsh J."/>
            <person name="Wang H."/>
            <person name="Weinstock K."/>
            <person name="West A.P."/>
            <person name="Willey D.L."/>
            <person name="Whitehead S.L."/>
            <person name="Wilming L."/>
            <person name="Wray P.W."/>
            <person name="Young L."/>
            <person name="Chen Y."/>
            <person name="Lovering R.C."/>
            <person name="Moschonas N.K."/>
            <person name="Siebert R."/>
            <person name="Fechtel K."/>
            <person name="Bentley D."/>
            <person name="Durbin R.M."/>
            <person name="Hubbard T."/>
            <person name="Doucette-Stamm L."/>
            <person name="Beck S."/>
            <person name="Smith D.R."/>
            <person name="Rogers J."/>
        </authorList>
    </citation>
    <scope>NUCLEOTIDE SEQUENCE [LARGE SCALE GENOMIC DNA]</scope>
</reference>
<reference key="12">
    <citation type="submission" date="2005-07" db="EMBL/GenBank/DDBJ databases">
        <authorList>
            <person name="Mural R.J."/>
            <person name="Istrail S."/>
            <person name="Sutton G.G."/>
            <person name="Florea L."/>
            <person name="Halpern A.L."/>
            <person name="Mobarry C.M."/>
            <person name="Lippert R."/>
            <person name="Walenz B."/>
            <person name="Shatkay H."/>
            <person name="Dew I."/>
            <person name="Miller J.R."/>
            <person name="Flanigan M.J."/>
            <person name="Edwards N.J."/>
            <person name="Bolanos R."/>
            <person name="Fasulo D."/>
            <person name="Halldorsson B.V."/>
            <person name="Hannenhalli S."/>
            <person name="Turner R."/>
            <person name="Yooseph S."/>
            <person name="Lu F."/>
            <person name="Nusskern D.R."/>
            <person name="Shue B.C."/>
            <person name="Zheng X.H."/>
            <person name="Zhong F."/>
            <person name="Delcher A.L."/>
            <person name="Huson D.H."/>
            <person name="Kravitz S.A."/>
            <person name="Mouchard L."/>
            <person name="Reinert K."/>
            <person name="Remington K.A."/>
            <person name="Clark A.G."/>
            <person name="Waterman M.S."/>
            <person name="Eichler E.E."/>
            <person name="Adams M.D."/>
            <person name="Hunkapiller M.W."/>
            <person name="Myers E.W."/>
            <person name="Venter J.C."/>
        </authorList>
    </citation>
    <scope>NUCLEOTIDE SEQUENCE [LARGE SCALE GENOMIC DNA]</scope>
</reference>
<reference key="13">
    <citation type="journal article" date="2004" name="Genome Res.">
        <title>The status, quality, and expansion of the NIH full-length cDNA project: the Mammalian Gene Collection (MGC).</title>
        <authorList>
            <consortium name="The MGC Project Team"/>
        </authorList>
    </citation>
    <scope>NUCLEOTIDE SEQUENCE [LARGE SCALE MRNA] (ISOFORM ALPHA)</scope>
    <source>
        <tissue>Brain</tissue>
    </source>
</reference>
<reference key="14">
    <citation type="journal article" date="1996" name="Nature">
        <title>The CXC chemokine SDF-1 is the ligand for LESTR/fusin and prevents infection by T-cell-line-adapted HIV-1.</title>
        <authorList>
            <person name="Oberlin E."/>
            <person name="Amara A."/>
            <person name="Bachelerie F."/>
            <person name="Bessia C."/>
            <person name="Virelizier J.-L."/>
            <person name="Arenzana-Seisdedos F."/>
            <person name="Schwartz O."/>
            <person name="Heard J.-M."/>
            <person name="Clark-Lewis I."/>
            <person name="Legler D.F."/>
            <person name="Loetscher M."/>
            <person name="Baggiolini M."/>
            <person name="Moser B."/>
        </authorList>
    </citation>
    <scope>FUNCTION</scope>
</reference>
<reference key="15">
    <citation type="journal article" date="1998" name="Nat. Med.">
        <title>AMD3100, a small molecule inhibitor of HIV-1 entry via the CXCR4 co-receptor.</title>
        <authorList>
            <person name="Donzella G.A."/>
            <person name="Schols D."/>
            <person name="Lin S.W."/>
            <person name="Este J.A."/>
            <person name="Nagashima K.A."/>
            <person name="Maddon P.J."/>
            <person name="Allaway G.P."/>
            <person name="Sakmar T.P."/>
            <person name="Henson G."/>
            <person name="De Clercq E."/>
            <person name="Moore J.P."/>
        </authorList>
    </citation>
    <scope>INTERACTION WITH CXCR4</scope>
</reference>
<reference key="16">
    <citation type="journal article" date="1999" name="J. Biol. Chem.">
        <title>Stromal cell-derived factor-1alpha associates with heparan sulfates through the first beta-strand of the chemokine.</title>
        <authorList>
            <person name="Amara A."/>
            <person name="Lorthioir O."/>
            <person name="Valenzuela A."/>
            <person name="Magerus A."/>
            <person name="Thelen M."/>
            <person name="Montes M."/>
            <person name="Virelizier J.L."/>
            <person name="Delepierre M."/>
            <person name="Baleux F."/>
            <person name="Lortat-Jacob H."/>
            <person name="Arenzana-Seisdedos F."/>
        </authorList>
    </citation>
    <scope>INTERACTION WITH HEPARAN SULFATE</scope>
    <scope>MUTAGENESIS OF 45-LYS--LYS-48</scope>
</reference>
<reference key="17">
    <citation type="journal article" date="2000" name="Eur. J. Immunol.">
        <title>Characterization of a Xenopus laevis CXC chemokine receptor 4: implications for hematopoietic cell development in the vertebrate embryo.</title>
        <authorList>
            <person name="Moepps B."/>
            <person name="Braun M."/>
            <person name="Knoepfle K."/>
            <person name="Dillinger K."/>
            <person name="Knoechel W."/>
            <person name="Gierschik P."/>
        </authorList>
    </citation>
    <scope>FUNCTION</scope>
</reference>
<reference key="18">
    <citation type="journal article" date="2002" name="J. Immunol.">
        <title>Xenopus laevis stromal cell-derived factor 1: conservation of structure and function during vertebrate development.</title>
        <authorList>
            <person name="Braun M."/>
            <person name="Wunderlin M."/>
            <person name="Spieth K."/>
            <person name="Knoechel W."/>
            <person name="Gierschik P."/>
            <person name="Moepps B."/>
        </authorList>
    </citation>
    <scope>FUNCTION</scope>
</reference>
<reference key="19">
    <citation type="journal article" date="2004" name="Blood">
        <title>Differential processing of stromal-derived factor-1alpha and beta explains functional diversity.</title>
        <authorList>
            <person name="De La Luz Sierra M."/>
            <person name="Yang F."/>
            <person name="Narazaki M."/>
            <person name="Salvucci O."/>
            <person name="Davis D."/>
            <person name="Yarchoan R."/>
            <person name="Zhang H.H."/>
            <person name="Fales H."/>
            <person name="Tosato G."/>
        </authorList>
    </citation>
    <scope>IDENTIFICATION OF SDF-1ALPHA(3-67) AND SDF-1BETA(3-72) BY MASS SPECTROMETRY</scope>
    <scope>PROTEOLYTIC PROCESSING OF N-TERMINUS AND C-TERMINUS</scope>
</reference>
<reference key="20">
    <citation type="journal article" date="2005" name="J. Biol. Chem.">
        <title>The chemokine SDF-1/CXCL12 binds to and signals through the orphan receptor RDC1 in T lymphocytes.</title>
        <authorList>
            <person name="Balabanian K."/>
            <person name="Lagane B."/>
            <person name="Infantino S."/>
            <person name="Chow K.Y."/>
            <person name="Harriague J."/>
            <person name="Moepps B."/>
            <person name="Arenzana-Seisdedos F."/>
            <person name="Thelen M."/>
            <person name="Bachelerie F."/>
        </authorList>
    </citation>
    <scope>FUNCTION</scope>
    <scope>INTERACTION WITH ACKR3</scope>
</reference>
<reference key="21">
    <citation type="journal article" date="2005" name="Protein Sci.">
        <title>The monomer-dimer equilibrium of stromal cell-derived factor-1 (CXCL 12) is altered by pH, phosphate, sulfate, and heparin.</title>
        <authorList>
            <person name="Veldkamp C.T."/>
            <person name="Peterson F.C."/>
            <person name="Pelzek A.J."/>
            <person name="Volkman B.F."/>
        </authorList>
    </citation>
    <scope>DIMERIZATION</scope>
    <scope>MUTAGENESIS OF HIS-46</scope>
</reference>
<reference key="22">
    <citation type="journal article" date="2006" name="J. Mol. Biol.">
        <title>Recognition of a CXCR4 sulfotyrosine by the chemokine stromal cell-derived factor-1alpha (SDF-1alpha/CXCL12).</title>
        <authorList>
            <person name="Veldkamp C.T."/>
            <person name="Seibert C."/>
            <person name="Peterson F.C."/>
            <person name="Sakmar T.P."/>
            <person name="Volkman B.F."/>
        </authorList>
    </citation>
    <scope>DIMERIZATION</scope>
    <scope>INTERACTION WITH CXCR4</scope>
</reference>
<reference key="23">
    <citation type="journal article" date="2008" name="J. Immunol.">
        <title>Monocyte migration and LFA-1-mediated attachment to brain microvascular endothelia is regulated by SDF-1 alpha through Lyn kinase.</title>
        <authorList>
            <person name="Malik M."/>
            <person name="Chen Y.-Y."/>
            <person name="Kienzle M.F."/>
            <person name="Tomkowicz B.E."/>
            <person name="Collman R.G."/>
            <person name="Ptasznik A."/>
        </authorList>
    </citation>
    <scope>FUNCTION</scope>
</reference>
<reference key="24">
    <citation type="journal article" date="2009" name="Mol. Pharmacol.">
        <title>AMD3100 is a CXCR7 ligand with allosteric agonist properties.</title>
        <authorList>
            <person name="Kalatskaya I."/>
            <person name="Berchiche Y.A."/>
            <person name="Gravel S."/>
            <person name="Limberg B.J."/>
            <person name="Rosenbaum J.S."/>
            <person name="Heveker N."/>
        </authorList>
    </citation>
    <scope>FUNCTION</scope>
    <scope>INTERACTION WITH ACKR3</scope>
</reference>
<reference key="25">
    <citation type="journal article" date="2011" name="Virology">
        <title>Role for the conserved N-terminal cysteines in the anti-chemokine activities by the chemokine-like protein MC148R1 encoded by Molluscum contagiosum virus.</title>
        <authorList>
            <person name="Jin Q."/>
            <person name="Altenburg J.D."/>
            <person name="Hossain M.M."/>
            <person name="Alkhatib G."/>
        </authorList>
    </citation>
    <scope>INTERACTION WITH MOLLUSCUM CONTAGIOSUM VIRUS PROTEIN MC148 (MICROBIAL INFECTION)</scope>
</reference>
<reference key="26">
    <citation type="journal article" date="2012" name="PLoS ONE">
        <title>Ubiquitination of CXCR7 controls receptor trafficking.</title>
        <authorList>
            <person name="Canals M."/>
            <person name="Scholten D.J."/>
            <person name="de Munnik S."/>
            <person name="Han M.K."/>
            <person name="Smit M.J."/>
            <person name="Leurs R."/>
        </authorList>
    </citation>
    <scope>RECEPTOR INTERACTION</scope>
</reference>
<reference key="27">
    <citation type="journal article" date="2016" name="J. Biol. Chem.">
        <title>The Anti-inflammatory Protein TSG-6 Regulates Chemokine Function by Inhibiting Chemokine/Glycosaminoglycan Interactions.</title>
        <authorList>
            <person name="Dyer D.P."/>
            <person name="Salanga C.L."/>
            <person name="Johns S.C."/>
            <person name="Valdambrini E."/>
            <person name="Fuster M.M."/>
            <person name="Milner C.M."/>
            <person name="Day A.J."/>
            <person name="Handel T.M."/>
        </authorList>
    </citation>
    <scope>INTERACTION WITH TNFAIP6</scope>
    <scope>MUTAGENESIS OF LYS-45; HIS-46 AND LYS-48</scope>
</reference>
<reference key="28">
    <citation type="journal article" date="2018" name="Biochem. J.">
        <title>Stromal cell-derived factor-1 (CXCL12) activates integrins by direct binding to an allosteric ligand-binding site (site 2) of integrins without CXCR4.</title>
        <authorList>
            <person name="Fujita M."/>
            <person name="Davari P."/>
            <person name="Takada Y.K."/>
            <person name="Takada Y."/>
        </authorList>
    </citation>
    <scope>FUNCTION</scope>
    <scope>INTERACTION WITH ITGB3</scope>
    <scope>SITES IMPORTANT FOR INTEGRIN BINDING</scope>
    <scope>MUTAGENESIS OF LYS-45; LYS-48 AND LYS-64</scope>
</reference>
<reference key="29">
    <citation type="journal article" date="1997" name="EMBO J.">
        <title>Solution structure and basis for functional activity of stromal cell-derived factor-1; dissociation of CXCR4 activation from binding and inhibition of HIV-1.</title>
        <authorList>
            <person name="Crump M.P."/>
            <person name="Gong J.H."/>
            <person name="Loetscher P."/>
            <person name="Rajarathnam K."/>
            <person name="Amara A."/>
            <person name="Arenzana-Seisdedos F."/>
            <person name="Virelizier J.-L."/>
            <person name="Baggiolini M."/>
            <person name="Sykes B.D."/>
            <person name="Clark-Lewis I."/>
        </authorList>
    </citation>
    <scope>STRUCTURE BY NMR OF 22-88</scope>
    <scope>DISULFIDE BONDS</scope>
    <scope>MUTAGENESIS OF LYS-22; PRO-23; 22-LYS-PRO-23; 25-SER--SER-27; TYR-28 AND ARG-29</scope>
</reference>
<reference key="30">
    <citation type="journal article" date="1998" name="Proc. Natl. Acad. Sci. U.S.A.">
        <title>Crystal structure of chemically synthesized [N33A] stromal cell-derived factor 1alpha, a potent ligand for the HIV-1 'fusin' coreceptor.</title>
        <authorList>
            <person name="Dealwis C."/>
            <person name="Fernandez E.J."/>
            <person name="Thompson D.A."/>
            <person name="Simon R.J."/>
            <person name="Siani M.A."/>
            <person name="Lolis E."/>
        </authorList>
    </citation>
    <scope>X-RAY CRYSTALLOGRAPHY (2.2 ANGSTROMS) OF 22-88 OF MUTANT ALA-54</scope>
    <scope>DISULFIDE BONDS</scope>
</reference>
<reference key="31">
    <citation type="journal article" date="2000" name="J. Interferon Cytokine Res.">
        <title>Crystal structure of recombinant native SDF-1alpha with additional mutagenesis studies: an attempt at a more comprehensive interpretation of accumulated structure-activity relationship data.</title>
        <authorList>
            <person name="Ohnishi Y."/>
            <person name="Senda T."/>
            <person name="Nandhagopal N."/>
            <person name="Sugimoto K."/>
            <person name="Shioda T."/>
            <person name="Nagal Y."/>
            <person name="Mitsui Y."/>
        </authorList>
    </citation>
    <scope>X-RAY CRYSTALLOGRAPHY (2.0 ANGSTROMS) OF 22-88</scope>
    <scope>DISULFIDE BONDS</scope>
    <scope>MUTAGENESIS OF ARG-33; PHE-34; PHE-35; GLU-36; SER-37; HIS-38 AND 33-ARG--HIS-38</scope>
</reference>
<reference key="32">
    <citation type="journal article" date="2005" name="J. Mol. Biol.">
        <title>Mapping the binding of the N-terminal extracellular tail of the CXCR4 receptor to stromal cell-derived factor-1alpha.</title>
        <authorList>
            <person name="Gozansky E.K."/>
            <person name="Louis J.M."/>
            <person name="Caffrey M."/>
            <person name="Clore G.M."/>
        </authorList>
    </citation>
    <scope>STRUCTURE BY NMR OF 22-89</scope>
    <scope>DISULFIDE BONDS</scope>
</reference>
<reference key="33">
    <citation type="journal article" date="2007" name="J. Biol. Chem.">
        <title>Structural and functional basis of CXCL12 (stromal cell-derived factor-1 alpha) binding to heparin.</title>
        <authorList>
            <person name="Murphy J.W."/>
            <person name="Cho Y."/>
            <person name="Sachpatzidis A."/>
            <person name="Fan C."/>
            <person name="Hodsdon M.E."/>
            <person name="Lolis E."/>
        </authorList>
    </citation>
    <scope>X-RAY CRYSTALLOGRAPHY (2.07 ANGSTROMS) OF 22-88 IN COMPLEX WITH HEPARIN DISACCHARIDE I-S</scope>
    <scope>DISULFIDE BONDS</scope>
    <scope>MUTAGENESIS OF ARG-29; ARG-33; 34-PHE-PHE-35; 36-GLU--HIS-38; HIS-46; LYS-48; 52-THR--ALA-56; ARG-62; ARG-68 AND GLN-69</scope>
</reference>
<reference key="34">
    <citation type="journal article" date="2007" name="Proteins">
        <title>Crystal structure of recombinant human stromal cell-derived factor-1alpha.</title>
        <authorList>
            <person name="Ryu E.K."/>
            <person name="Kim T.G."/>
            <person name="Kwon T.H."/>
            <person name="Jung I.D."/>
            <person name="Ryu D."/>
            <person name="Park Y.M."/>
            <person name="Kim J."/>
            <person name="Ahn K.H."/>
            <person name="Ban C."/>
        </authorList>
    </citation>
    <scope>X-RAY CRYSTALLOGRAPHY (1.95 ANGSTROMS) OF 22-89</scope>
    <scope>DISULFIDE BONDS</scope>
    <scope>MUTAGENESIS OF LYS-22</scope>
</reference>
<reference key="35">
    <citation type="journal article" date="2008" name="Sci. Signal.">
        <title>Structural basis of CXCR4 sulfotyrosine recognition by the chemokine SDF-1/CXCL12.</title>
        <authorList>
            <person name="Veldkamp C.T."/>
            <person name="Seibert C."/>
            <person name="Peterson F.C."/>
            <person name="De la Cruz N.B."/>
            <person name="Haugner J.C. III"/>
            <person name="Basnet H."/>
            <person name="Sakmar T.P."/>
            <person name="Volkman B.F."/>
        </authorList>
    </citation>
    <scope>STRUCTURE BY NMR OF 22-89 OF MUTANT CYS-57 AND CYS-86 IN COMPLEX WITH CXCR4 FRAGMENT</scope>
    <scope>SUBUNIT</scope>
    <scope>DIMERIZATION</scope>
    <scope>DISULFIDE BONDS</scope>
    <scope>MUTAGENESIS OF ARG-41; HIS-46; LYS-48; VAL-60; ARG-62; ARG-68; VAL-70; GLU-81; GLU-84 AND LYS-85</scope>
</reference>
<reference key="36">
    <citation type="journal article" date="2009" name="Protein Sci.">
        <title>Monomeric structure of the cardioprotective chemokine SDF-1/CXCL12.</title>
        <authorList>
            <person name="Veldkamp C.T."/>
            <person name="Ziarek J.J."/>
            <person name="Su J."/>
            <person name="Basnet H."/>
            <person name="Lennertz R."/>
            <person name="Weiner J.J."/>
            <person name="Peterson F.C."/>
            <person name="Baker J.E."/>
            <person name="Volkman B.F."/>
        </authorList>
    </citation>
    <scope>STRUCTURE BY NMR OF 22-89</scope>
    <scope>ASSAY ON RAT ISCHEMIA/REPERFUSION MODEL</scope>
    <scope>DIMERIZATION</scope>
    <scope>DISULFIDE BONDS</scope>
</reference>
<reference key="37">
    <citation type="submission" date="2009-09" db="PDB data bank">
        <title>Solution structure of human SDF1-alpha H25R.</title>
        <authorList>
            <person name="Ziarek J.J."/>
            <person name="Veldkamp C.T."/>
            <person name="Peterson F.C."/>
            <person name="Volkman B.F."/>
        </authorList>
    </citation>
    <scope>STRUCTURE BY NMR OF 22-89</scope>
    <scope>DISULFIDE BONDS</scope>
</reference>
<reference key="38">
    <citation type="journal article" date="2010" name="Proteins">
        <title>Heterologous quaternary structure of CXCL12 and its relationship to the CC chemokine family.</title>
        <authorList>
            <person name="Murphy J.W."/>
            <person name="Yuan H."/>
            <person name="Kong Y."/>
            <person name="Xiong Y."/>
            <person name="Lolis E.J."/>
        </authorList>
    </citation>
    <scope>X-RAY CRYSTALLOGRAPHY (1.60 ANGSTROMS) OF 22-88</scope>
    <scope>DIMERIZATION</scope>
</reference>
<accession>P48061</accession>
<accession>B2R4G0</accession>
<accession>E7EVL0</accession>
<accession>H7BYN8</accession>
<accession>Q2L985</accession>
<accession>Q2L986</accession>
<accession>Q2L988</accession>
<accession>Q5IT36</accession>
<accession>Q6ICW0</accession>
<accession>Q9H554</accession>
<name>SDF1_HUMAN</name>
<organism>
    <name type="scientific">Homo sapiens</name>
    <name type="common">Human</name>
    <dbReference type="NCBI Taxonomy" id="9606"/>
    <lineage>
        <taxon>Eukaryota</taxon>
        <taxon>Metazoa</taxon>
        <taxon>Chordata</taxon>
        <taxon>Craniata</taxon>
        <taxon>Vertebrata</taxon>
        <taxon>Euteleostomi</taxon>
        <taxon>Mammalia</taxon>
        <taxon>Eutheria</taxon>
        <taxon>Euarchontoglires</taxon>
        <taxon>Primates</taxon>
        <taxon>Haplorrhini</taxon>
        <taxon>Catarrhini</taxon>
        <taxon>Hominidae</taxon>
        <taxon>Homo</taxon>
    </lineage>
</organism>
<dbReference type="EMBL" id="L36033">
    <property type="protein sequence ID" value="AAB39332.1"/>
    <property type="molecule type" value="mRNA"/>
</dbReference>
<dbReference type="EMBL" id="L36034">
    <property type="protein sequence ID" value="AAB39333.1"/>
    <property type="molecule type" value="mRNA"/>
</dbReference>
<dbReference type="EMBL" id="DQ345517">
    <property type="protein sequence ID" value="ABC69270.1"/>
    <property type="molecule type" value="mRNA"/>
</dbReference>
<dbReference type="EMBL" id="DQ345518">
    <property type="protein sequence ID" value="ABC69271.1"/>
    <property type="molecule type" value="mRNA"/>
</dbReference>
<dbReference type="EMBL" id="DQ345519">
    <property type="protein sequence ID" value="ABC69272.1"/>
    <property type="molecule type" value="mRNA"/>
</dbReference>
<dbReference type="EMBL" id="DQ345520">
    <property type="protein sequence ID" value="ABC69273.1"/>
    <property type="molecule type" value="mRNA"/>
</dbReference>
<dbReference type="EMBL" id="U16752">
    <property type="protein sequence ID" value="AAA97434.1"/>
    <property type="molecule type" value="mRNA"/>
</dbReference>
<dbReference type="EMBL" id="U19495">
    <property type="protein sequence ID" value="AAB40516.1"/>
    <property type="molecule type" value="mRNA"/>
</dbReference>
<dbReference type="EMBL" id="AY644456">
    <property type="protein sequence ID" value="AAT76437.1"/>
    <property type="molecule type" value="mRNA"/>
</dbReference>
<dbReference type="EMBL" id="AY874118">
    <property type="protein sequence ID" value="AAW82036.1"/>
    <property type="molecule type" value="mRNA"/>
</dbReference>
<dbReference type="EMBL" id="CR450283">
    <property type="protein sequence ID" value="CAG29279.1"/>
    <property type="molecule type" value="mRNA"/>
</dbReference>
<dbReference type="EMBL" id="AK292628">
    <property type="protein sequence ID" value="BAF85317.1"/>
    <property type="molecule type" value="mRNA"/>
</dbReference>
<dbReference type="EMBL" id="AK311814">
    <property type="protein sequence ID" value="BAG34757.1"/>
    <property type="molecule type" value="mRNA"/>
</dbReference>
<dbReference type="EMBL" id="AU120056">
    <property type="status" value="NOT_ANNOTATED_CDS"/>
    <property type="molecule type" value="mRNA"/>
</dbReference>
<dbReference type="EMBL" id="AY802782">
    <property type="protein sequence ID" value="AAV49999.1"/>
    <property type="molecule type" value="Genomic_DNA"/>
</dbReference>
<dbReference type="EMBL" id="AL137026">
    <property type="status" value="NOT_ANNOTATED_CDS"/>
    <property type="molecule type" value="Genomic_DNA"/>
</dbReference>
<dbReference type="EMBL" id="CH471160">
    <property type="protein sequence ID" value="EAW86619.1"/>
    <property type="molecule type" value="Genomic_DNA"/>
</dbReference>
<dbReference type="EMBL" id="BC039893">
    <property type="protein sequence ID" value="AAH39893.1"/>
    <property type="molecule type" value="mRNA"/>
</dbReference>
<dbReference type="CCDS" id="CCDS31186.1">
    <molecule id="P48061-3"/>
</dbReference>
<dbReference type="CCDS" id="CCDS44373.1">
    <molecule id="P48061-1"/>
</dbReference>
<dbReference type="CCDS" id="CCDS53527.1">
    <molecule id="P48061-4"/>
</dbReference>
<dbReference type="CCDS" id="CCDS60518.1">
    <molecule id="P48061-7"/>
</dbReference>
<dbReference type="CCDS" id="CCDS7207.1">
    <molecule id="P48061-2"/>
</dbReference>
<dbReference type="PIR" id="G01540">
    <property type="entry name" value="G01540"/>
</dbReference>
<dbReference type="RefSeq" id="NP_000600.1">
    <molecule id="P48061-1"/>
    <property type="nucleotide sequence ID" value="NM_000609.7"/>
</dbReference>
<dbReference type="RefSeq" id="NP_001029058.1">
    <molecule id="P48061-3"/>
    <property type="nucleotide sequence ID" value="NM_001033886.2"/>
</dbReference>
<dbReference type="RefSeq" id="NP_001171605.1">
    <molecule id="P48061-4"/>
    <property type="nucleotide sequence ID" value="NM_001178134.2"/>
</dbReference>
<dbReference type="RefSeq" id="NP_001264919.1">
    <molecule id="P48061-7"/>
    <property type="nucleotide sequence ID" value="NM_001277990.2"/>
</dbReference>
<dbReference type="RefSeq" id="NP_954637.1">
    <molecule id="P48061-2"/>
    <property type="nucleotide sequence ID" value="NM_199168.4"/>
</dbReference>
<dbReference type="PDB" id="1A15">
    <property type="method" value="X-ray"/>
    <property type="resolution" value="2.20 A"/>
    <property type="chains" value="A/B=22-88"/>
</dbReference>
<dbReference type="PDB" id="1QG7">
    <property type="method" value="X-ray"/>
    <property type="resolution" value="2.00 A"/>
    <property type="chains" value="A/B=22-88"/>
</dbReference>
<dbReference type="PDB" id="1SDF">
    <property type="method" value="NMR"/>
    <property type="chains" value="A=22-88"/>
</dbReference>
<dbReference type="PDB" id="1VMC">
    <property type="method" value="NMR"/>
    <property type="chains" value="A=22-89"/>
</dbReference>
<dbReference type="PDB" id="2J7Z">
    <property type="method" value="X-ray"/>
    <property type="resolution" value="1.95 A"/>
    <property type="chains" value="A/B=22-89"/>
</dbReference>
<dbReference type="PDB" id="2K01">
    <property type="method" value="NMR"/>
    <property type="chains" value="A/C=22-89"/>
</dbReference>
<dbReference type="PDB" id="2K03">
    <property type="method" value="NMR"/>
    <property type="chains" value="A/C=22-89"/>
</dbReference>
<dbReference type="PDB" id="2K04">
    <property type="method" value="NMR"/>
    <property type="chains" value="A/C=22-89"/>
</dbReference>
<dbReference type="PDB" id="2K05">
    <property type="method" value="NMR"/>
    <property type="chains" value="A/C=22-89"/>
</dbReference>
<dbReference type="PDB" id="2KEC">
    <property type="method" value="NMR"/>
    <property type="chains" value="A=22-89"/>
</dbReference>
<dbReference type="PDB" id="2KED">
    <property type="method" value="NMR"/>
    <property type="chains" value="A=22-89"/>
</dbReference>
<dbReference type="PDB" id="2KEE">
    <property type="method" value="NMR"/>
    <property type="chains" value="A=22-89"/>
</dbReference>
<dbReference type="PDB" id="2KOL">
    <property type="method" value="NMR"/>
    <property type="chains" value="A=22-89"/>
</dbReference>
<dbReference type="PDB" id="2N55">
    <property type="method" value="NMR"/>
    <property type="chains" value="A=22-89"/>
</dbReference>
<dbReference type="PDB" id="2NWG">
    <property type="method" value="X-ray"/>
    <property type="resolution" value="2.07 A"/>
    <property type="chains" value="A/B=22-88"/>
</dbReference>
<dbReference type="PDB" id="2SDF">
    <property type="method" value="NMR"/>
    <property type="chains" value="A=22-88"/>
</dbReference>
<dbReference type="PDB" id="3GV3">
    <property type="method" value="X-ray"/>
    <property type="resolution" value="1.60 A"/>
    <property type="chains" value="A=26-88"/>
</dbReference>
<dbReference type="PDB" id="3HP3">
    <property type="method" value="X-ray"/>
    <property type="resolution" value="2.20 A"/>
    <property type="chains" value="A/B/C/D/E/F/G/H/I/J=22-88"/>
</dbReference>
<dbReference type="PDB" id="4LMQ">
    <property type="method" value="X-ray"/>
    <property type="resolution" value="2.77 A"/>
    <property type="chains" value="D/F=29-89"/>
</dbReference>
<dbReference type="PDB" id="4UAI">
    <property type="method" value="X-ray"/>
    <property type="resolution" value="1.90 A"/>
    <property type="chains" value="A/B=22-89"/>
</dbReference>
<dbReference type="PDB" id="6SHR">
    <property type="method" value="X-ray"/>
    <property type="resolution" value="1.75 A"/>
    <property type="chains" value="A=26-89"/>
</dbReference>
<dbReference type="PDB" id="7SK3">
    <property type="method" value="EM"/>
    <property type="resolution" value="3.80 A"/>
    <property type="chains" value="B=22-89"/>
</dbReference>
<dbReference type="PDB" id="7SK4">
    <property type="method" value="EM"/>
    <property type="resolution" value="3.30 A"/>
    <property type="chains" value="B=22-89"/>
</dbReference>
<dbReference type="PDB" id="7SK5">
    <property type="method" value="EM"/>
    <property type="resolution" value="4.00 A"/>
    <property type="chains" value="B=22-89"/>
</dbReference>
<dbReference type="PDB" id="7SK6">
    <property type="method" value="EM"/>
    <property type="resolution" value="4.00 A"/>
    <property type="chains" value="B=22-89"/>
</dbReference>
<dbReference type="PDB" id="7SK7">
    <property type="method" value="EM"/>
    <property type="resolution" value="3.30 A"/>
    <property type="chains" value="B=22-89"/>
</dbReference>
<dbReference type="PDB" id="7SK8">
    <property type="method" value="EM"/>
    <property type="resolution" value="3.30 A"/>
    <property type="chains" value="B=22-89"/>
</dbReference>
<dbReference type="PDB" id="8K3Z">
    <property type="method" value="EM"/>
    <property type="resolution" value="2.81 A"/>
    <property type="chains" value="D=22-83"/>
</dbReference>
<dbReference type="PDB" id="8U4O">
    <property type="method" value="EM"/>
    <property type="resolution" value="3.29 A"/>
    <property type="chains" value="J=22-89"/>
</dbReference>
<dbReference type="PDBsum" id="1A15"/>
<dbReference type="PDBsum" id="1QG7"/>
<dbReference type="PDBsum" id="1SDF"/>
<dbReference type="PDBsum" id="1VMC"/>
<dbReference type="PDBsum" id="2J7Z"/>
<dbReference type="PDBsum" id="2K01"/>
<dbReference type="PDBsum" id="2K03"/>
<dbReference type="PDBsum" id="2K04"/>
<dbReference type="PDBsum" id="2K05"/>
<dbReference type="PDBsum" id="2KEC"/>
<dbReference type="PDBsum" id="2KED"/>
<dbReference type="PDBsum" id="2KEE"/>
<dbReference type="PDBsum" id="2KOL"/>
<dbReference type="PDBsum" id="2N55"/>
<dbReference type="PDBsum" id="2NWG"/>
<dbReference type="PDBsum" id="2SDF"/>
<dbReference type="PDBsum" id="3GV3"/>
<dbReference type="PDBsum" id="3HP3"/>
<dbReference type="PDBsum" id="4LMQ"/>
<dbReference type="PDBsum" id="4UAI"/>
<dbReference type="PDBsum" id="6SHR"/>
<dbReference type="PDBsum" id="7SK3"/>
<dbReference type="PDBsum" id="7SK4"/>
<dbReference type="PDBsum" id="7SK5"/>
<dbReference type="PDBsum" id="7SK6"/>
<dbReference type="PDBsum" id="7SK7"/>
<dbReference type="PDBsum" id="7SK8"/>
<dbReference type="PDBsum" id="8K3Z"/>
<dbReference type="PDBsum" id="8U4O"/>
<dbReference type="BMRB" id="P48061"/>
<dbReference type="EMDB" id="EMD-25171"/>
<dbReference type="EMDB" id="EMD-25172"/>
<dbReference type="EMDB" id="EMD-25173"/>
<dbReference type="EMDB" id="EMD-25174"/>
<dbReference type="EMDB" id="EMD-25175"/>
<dbReference type="EMDB" id="EMD-25176"/>
<dbReference type="EMDB" id="EMD-36869"/>
<dbReference type="EMDB" id="EMD-41889"/>
<dbReference type="SASBDB" id="P48061"/>
<dbReference type="SMR" id="P48061"/>
<dbReference type="BioGRID" id="112288">
    <property type="interactions" value="32"/>
</dbReference>
<dbReference type="CORUM" id="P48061"/>
<dbReference type="DIP" id="DIP-391N"/>
<dbReference type="FunCoup" id="P48061">
    <property type="interactions" value="1108"/>
</dbReference>
<dbReference type="IntAct" id="P48061">
    <property type="interactions" value="28"/>
</dbReference>
<dbReference type="MINT" id="P48061"/>
<dbReference type="STRING" id="9606.ENSP00000379140"/>
<dbReference type="BindingDB" id="P48061"/>
<dbReference type="ChEMBL" id="CHEMBL3286074"/>
<dbReference type="DrugBank" id="DB05934">
    <property type="generic name" value="CTCE-0214"/>
</dbReference>
<dbReference type="DrugBank" id="DB06822">
    <property type="generic name" value="Tinzaparin"/>
</dbReference>
<dbReference type="DrugCentral" id="P48061"/>
<dbReference type="iPTMnet" id="P48061"/>
<dbReference type="PhosphoSitePlus" id="P48061"/>
<dbReference type="BioMuta" id="CXCL12"/>
<dbReference type="DMDM" id="1352728"/>
<dbReference type="jPOST" id="P48061"/>
<dbReference type="MassIVE" id="P48061"/>
<dbReference type="PaxDb" id="9606-ENSP00000379140"/>
<dbReference type="PeptideAtlas" id="P48061"/>
<dbReference type="ProteomicsDB" id="55853">
    <molecule id="P48061-1"/>
</dbReference>
<dbReference type="ProteomicsDB" id="55854">
    <molecule id="P48061-2"/>
</dbReference>
<dbReference type="ProteomicsDB" id="55855">
    <molecule id="P48061-3"/>
</dbReference>
<dbReference type="ProteomicsDB" id="55856">
    <molecule id="P48061-4"/>
</dbReference>
<dbReference type="ProteomicsDB" id="55857">
    <molecule id="P48061-5"/>
</dbReference>
<dbReference type="ProteomicsDB" id="55858">
    <molecule id="P48061-6"/>
</dbReference>
<dbReference type="ABCD" id="P48061">
    <property type="antibodies" value="3 sequenced antibodies"/>
</dbReference>
<dbReference type="Antibodypedia" id="4314">
    <property type="antibodies" value="901 antibodies from 44 providers"/>
</dbReference>
<dbReference type="DNASU" id="6387"/>
<dbReference type="Ensembl" id="ENST00000343575.11">
    <molecule id="P48061-2"/>
    <property type="protein sequence ID" value="ENSP00000339913.6"/>
    <property type="gene ID" value="ENSG00000107562.18"/>
</dbReference>
<dbReference type="Ensembl" id="ENST00000374426.6">
    <molecule id="P48061-3"/>
    <property type="protein sequence ID" value="ENSP00000363548.2"/>
    <property type="gene ID" value="ENSG00000107562.18"/>
</dbReference>
<dbReference type="Ensembl" id="ENST00000374429.6">
    <molecule id="P48061-1"/>
    <property type="protein sequence ID" value="ENSP00000363551.2"/>
    <property type="gene ID" value="ENSG00000107562.18"/>
</dbReference>
<dbReference type="Ensembl" id="ENST00000395793.7">
    <molecule id="P48061-7"/>
    <property type="protein sequence ID" value="ENSP00000379139.3"/>
    <property type="gene ID" value="ENSG00000107562.18"/>
</dbReference>
<dbReference type="Ensembl" id="ENST00000395794.2">
    <molecule id="P48061-4"/>
    <property type="protein sequence ID" value="ENSP00000379140.2"/>
    <property type="gene ID" value="ENSG00000107562.18"/>
</dbReference>
<dbReference type="GeneID" id="6387"/>
<dbReference type="KEGG" id="hsa:6387"/>
<dbReference type="MANE-Select" id="ENST00000343575.11">
    <molecule id="P48061-2"/>
    <property type="protein sequence ID" value="ENSP00000339913.6"/>
    <property type="RefSeq nucleotide sequence ID" value="NM_199168.4"/>
    <property type="RefSeq protein sequence ID" value="NP_954637.1"/>
</dbReference>
<dbReference type="UCSC" id="uc001jbf.5">
    <molecule id="P48061-1"/>
    <property type="organism name" value="human"/>
</dbReference>
<dbReference type="AGR" id="HGNC:10672"/>
<dbReference type="CTD" id="6387"/>
<dbReference type="DisGeNET" id="6387"/>
<dbReference type="GeneCards" id="CXCL12"/>
<dbReference type="HGNC" id="HGNC:10672">
    <property type="gene designation" value="CXCL12"/>
</dbReference>
<dbReference type="HPA" id="ENSG00000107562">
    <property type="expression patterns" value="Low tissue specificity"/>
</dbReference>
<dbReference type="MalaCards" id="CXCL12"/>
<dbReference type="MIM" id="600835">
    <property type="type" value="gene"/>
</dbReference>
<dbReference type="neXtProt" id="NX_P48061"/>
<dbReference type="OpenTargets" id="ENSG00000107562"/>
<dbReference type="PharmGKB" id="PA35602"/>
<dbReference type="VEuPathDB" id="HostDB:ENSG00000107562"/>
<dbReference type="eggNOG" id="ENOG502S54U">
    <property type="taxonomic scope" value="Eukaryota"/>
</dbReference>
<dbReference type="GeneTree" id="ENSGT00390000014056"/>
<dbReference type="HOGENOM" id="CLU_2262823_0_0_1"/>
<dbReference type="InParanoid" id="P48061"/>
<dbReference type="OMA" id="HVAKSQI"/>
<dbReference type="OrthoDB" id="9884353at2759"/>
<dbReference type="PAN-GO" id="P48061">
    <property type="GO annotations" value="8 GO annotations based on evolutionary models"/>
</dbReference>
<dbReference type="PhylomeDB" id="P48061"/>
<dbReference type="TreeFam" id="TF353159"/>
<dbReference type="PathwayCommons" id="P48061"/>
<dbReference type="Reactome" id="R-HSA-1251985">
    <property type="pathway name" value="Nuclear signaling by ERBB4"/>
</dbReference>
<dbReference type="Reactome" id="R-HSA-376176">
    <property type="pathway name" value="Signaling by ROBO receptors"/>
</dbReference>
<dbReference type="Reactome" id="R-HSA-380108">
    <property type="pathway name" value="Chemokine receptors bind chemokines"/>
</dbReference>
<dbReference type="Reactome" id="R-HSA-418594">
    <property type="pathway name" value="G alpha (i) signalling events"/>
</dbReference>
<dbReference type="Reactome" id="R-HSA-9018519">
    <property type="pathway name" value="Estrogen-dependent gene expression"/>
</dbReference>
<dbReference type="SignaLink" id="P48061"/>
<dbReference type="SIGNOR" id="P48061"/>
<dbReference type="BioGRID-ORCS" id="6387">
    <property type="hits" value="13 hits in 1149 CRISPR screens"/>
</dbReference>
<dbReference type="ChiTaRS" id="CXCL12">
    <property type="organism name" value="human"/>
</dbReference>
<dbReference type="EvolutionaryTrace" id="P48061"/>
<dbReference type="GeneWiki" id="Stromal_cell-derived_factor-1"/>
<dbReference type="GenomeRNAi" id="6387"/>
<dbReference type="Pharos" id="P48061">
    <property type="development level" value="Tchem"/>
</dbReference>
<dbReference type="PRO" id="PR:P48061"/>
<dbReference type="Proteomes" id="UP000005640">
    <property type="component" value="Chromosome 10"/>
</dbReference>
<dbReference type="RNAct" id="P48061">
    <property type="molecule type" value="protein"/>
</dbReference>
<dbReference type="Bgee" id="ENSG00000107562">
    <property type="expression patterns" value="Expressed in synovial joint and 198 other cell types or tissues"/>
</dbReference>
<dbReference type="GO" id="GO:0062023">
    <property type="term" value="C:collagen-containing extracellular matrix"/>
    <property type="evidence" value="ECO:0007005"/>
    <property type="project" value="BHF-UCL"/>
</dbReference>
<dbReference type="GO" id="GO:0009897">
    <property type="term" value="C:external side of plasma membrane"/>
    <property type="evidence" value="ECO:0000318"/>
    <property type="project" value="GO_Central"/>
</dbReference>
<dbReference type="GO" id="GO:0070062">
    <property type="term" value="C:extracellular exosome"/>
    <property type="evidence" value="ECO:0007005"/>
    <property type="project" value="UniProtKB"/>
</dbReference>
<dbReference type="GO" id="GO:0005576">
    <property type="term" value="C:extracellular region"/>
    <property type="evidence" value="ECO:0000304"/>
    <property type="project" value="Reactome"/>
</dbReference>
<dbReference type="GO" id="GO:0008009">
    <property type="term" value="F:chemokine activity"/>
    <property type="evidence" value="ECO:0000314"/>
    <property type="project" value="UniProtKB"/>
</dbReference>
<dbReference type="GO" id="GO:0042379">
    <property type="term" value="F:chemokine receptor binding"/>
    <property type="evidence" value="ECO:0000315"/>
    <property type="project" value="UniProtKB"/>
</dbReference>
<dbReference type="GO" id="GO:0045236">
    <property type="term" value="F:CXCR chemokine receptor binding"/>
    <property type="evidence" value="ECO:0000314"/>
    <property type="project" value="BHF-UCL"/>
</dbReference>
<dbReference type="GO" id="GO:0008083">
    <property type="term" value="F:growth factor activity"/>
    <property type="evidence" value="ECO:0007669"/>
    <property type="project" value="UniProtKB-KW"/>
</dbReference>
<dbReference type="GO" id="GO:0005178">
    <property type="term" value="F:integrin binding"/>
    <property type="evidence" value="ECO:0000314"/>
    <property type="project" value="UniProtKB"/>
</dbReference>
<dbReference type="GO" id="GO:0005102">
    <property type="term" value="F:signaling receptor binding"/>
    <property type="evidence" value="ECO:0000304"/>
    <property type="project" value="ProtInc"/>
</dbReference>
<dbReference type="GO" id="GO:0008344">
    <property type="term" value="P:adult locomotory behavior"/>
    <property type="evidence" value="ECO:0007669"/>
    <property type="project" value="Ensembl"/>
</dbReference>
<dbReference type="GO" id="GO:0031100">
    <property type="term" value="P:animal organ regeneration"/>
    <property type="evidence" value="ECO:0007669"/>
    <property type="project" value="Ensembl"/>
</dbReference>
<dbReference type="GO" id="GO:0007411">
    <property type="term" value="P:axon guidance"/>
    <property type="evidence" value="ECO:0000318"/>
    <property type="project" value="GO_Central"/>
</dbReference>
<dbReference type="GO" id="GO:0008015">
    <property type="term" value="P:blood circulation"/>
    <property type="evidence" value="ECO:0000304"/>
    <property type="project" value="ProtInc"/>
</dbReference>
<dbReference type="GO" id="GO:0007155">
    <property type="term" value="P:cell adhesion"/>
    <property type="evidence" value="ECO:0000304"/>
    <property type="project" value="ProtInc"/>
</dbReference>
<dbReference type="GO" id="GO:0060326">
    <property type="term" value="P:cell chemotaxis"/>
    <property type="evidence" value="ECO:0000314"/>
    <property type="project" value="UniProtKB"/>
</dbReference>
<dbReference type="GO" id="GO:1990869">
    <property type="term" value="P:cellular response to chemokine"/>
    <property type="evidence" value="ECO:0000315"/>
    <property type="project" value="BHF-UCL"/>
</dbReference>
<dbReference type="GO" id="GO:0038146">
    <property type="term" value="P:chemokine (C-X-C motif) ligand 12 signaling pathway"/>
    <property type="evidence" value="ECO:0000315"/>
    <property type="project" value="BHF-UCL"/>
</dbReference>
<dbReference type="GO" id="GO:0070098">
    <property type="term" value="P:chemokine-mediated signaling pathway"/>
    <property type="evidence" value="ECO:0000314"/>
    <property type="project" value="BHF-UCL"/>
</dbReference>
<dbReference type="GO" id="GO:0006935">
    <property type="term" value="P:chemotaxis"/>
    <property type="evidence" value="ECO:0000304"/>
    <property type="project" value="UniProtKB"/>
</dbReference>
<dbReference type="GO" id="GO:0038160">
    <property type="term" value="P:CXCL12-activated CXCR4 signaling pathway"/>
    <property type="evidence" value="ECO:0000316"/>
    <property type="project" value="BHF-UCL"/>
</dbReference>
<dbReference type="GO" id="GO:0006952">
    <property type="term" value="P:defense response"/>
    <property type="evidence" value="ECO:0007669"/>
    <property type="project" value="InterPro"/>
</dbReference>
<dbReference type="GO" id="GO:0050966">
    <property type="term" value="P:detection of mechanical stimulus involved in sensory perception of pain"/>
    <property type="evidence" value="ECO:0007669"/>
    <property type="project" value="Ensembl"/>
</dbReference>
<dbReference type="GO" id="GO:0050965">
    <property type="term" value="P:detection of temperature stimulus involved in sensory perception of pain"/>
    <property type="evidence" value="ECO:0007669"/>
    <property type="project" value="Ensembl"/>
</dbReference>
<dbReference type="GO" id="GO:0007186">
    <property type="term" value="P:G protein-coupled receptor signaling pathway"/>
    <property type="evidence" value="ECO:0000304"/>
    <property type="project" value="ProtInc"/>
</dbReference>
<dbReference type="GO" id="GO:0006955">
    <property type="term" value="P:immune response"/>
    <property type="evidence" value="ECO:0000304"/>
    <property type="project" value="ProtInc"/>
</dbReference>
<dbReference type="GO" id="GO:0050930">
    <property type="term" value="P:induction of positive chemotaxis"/>
    <property type="evidence" value="ECO:0000318"/>
    <property type="project" value="GO_Central"/>
</dbReference>
<dbReference type="GO" id="GO:0033622">
    <property type="term" value="P:integrin activation"/>
    <property type="evidence" value="ECO:0000314"/>
    <property type="project" value="UniProtKB"/>
</dbReference>
<dbReference type="GO" id="GO:0006874">
    <property type="term" value="P:intracellular calcium ion homeostasis"/>
    <property type="evidence" value="ECO:0000304"/>
    <property type="project" value="ProtInc"/>
</dbReference>
<dbReference type="GO" id="GO:2000669">
    <property type="term" value="P:negative regulation of dendritic cell apoptotic process"/>
    <property type="evidence" value="ECO:0000314"/>
    <property type="project" value="BHF-UCL"/>
</dbReference>
<dbReference type="GO" id="GO:1902230">
    <property type="term" value="P:negative regulation of intrinsic apoptotic signaling pathway in response to DNA damage"/>
    <property type="evidence" value="ECO:0000314"/>
    <property type="project" value="BHF-UCL"/>
</dbReference>
<dbReference type="GO" id="GO:1903237">
    <property type="term" value="P:negative regulation of leukocyte tethering or rolling"/>
    <property type="evidence" value="ECO:0000314"/>
    <property type="project" value="UniProtKB"/>
</dbReference>
<dbReference type="GO" id="GO:0001764">
    <property type="term" value="P:neuron migration"/>
    <property type="evidence" value="ECO:0007669"/>
    <property type="project" value="Ensembl"/>
</dbReference>
<dbReference type="GO" id="GO:0048842">
    <property type="term" value="P:positive regulation of axon extension involved in axon guidance"/>
    <property type="evidence" value="ECO:0007669"/>
    <property type="project" value="Ensembl"/>
</dbReference>
<dbReference type="GO" id="GO:0090280">
    <property type="term" value="P:positive regulation of calcium ion import"/>
    <property type="evidence" value="ECO:0000304"/>
    <property type="project" value="BHF-UCL"/>
</dbReference>
<dbReference type="GO" id="GO:0045785">
    <property type="term" value="P:positive regulation of cell adhesion"/>
    <property type="evidence" value="ECO:0000314"/>
    <property type="project" value="MGI"/>
</dbReference>
<dbReference type="GO" id="GO:0030335">
    <property type="term" value="P:positive regulation of cell migration"/>
    <property type="evidence" value="ECO:0000318"/>
    <property type="project" value="GO_Central"/>
</dbReference>
<dbReference type="GO" id="GO:0033603">
    <property type="term" value="P:positive regulation of dopamine secretion"/>
    <property type="evidence" value="ECO:0007669"/>
    <property type="project" value="Ensembl"/>
</dbReference>
<dbReference type="GO" id="GO:0001938">
    <property type="term" value="P:positive regulation of endothelial cell proliferation"/>
    <property type="evidence" value="ECO:0007669"/>
    <property type="project" value="Ensembl"/>
</dbReference>
<dbReference type="GO" id="GO:0090026">
    <property type="term" value="P:positive regulation of monocyte chemotaxis"/>
    <property type="evidence" value="ECO:0000314"/>
    <property type="project" value="UniProtKB"/>
</dbReference>
<dbReference type="GO" id="GO:0045666">
    <property type="term" value="P:positive regulation of neuron differentiation"/>
    <property type="evidence" value="ECO:0007669"/>
    <property type="project" value="Ensembl"/>
</dbReference>
<dbReference type="GO" id="GO:2000406">
    <property type="term" value="P:positive regulation of T cell migration"/>
    <property type="evidence" value="ECO:0000314"/>
    <property type="project" value="MGI"/>
</dbReference>
<dbReference type="GO" id="GO:1904018">
    <property type="term" value="P:positive regulation of vasculature development"/>
    <property type="evidence" value="ECO:0000315"/>
    <property type="project" value="BHF-UCL"/>
</dbReference>
<dbReference type="GO" id="GO:0008064">
    <property type="term" value="P:regulation of actin polymerization or depolymerization"/>
    <property type="evidence" value="ECO:0000304"/>
    <property type="project" value="ProtInc"/>
</dbReference>
<dbReference type="GO" id="GO:0001666">
    <property type="term" value="P:response to hypoxia"/>
    <property type="evidence" value="ECO:0007669"/>
    <property type="project" value="Ensembl"/>
</dbReference>
<dbReference type="GO" id="GO:0043434">
    <property type="term" value="P:response to peptide hormone"/>
    <property type="evidence" value="ECO:0007669"/>
    <property type="project" value="Ensembl"/>
</dbReference>
<dbReference type="GO" id="GO:1990478">
    <property type="term" value="P:response to ultrasound"/>
    <property type="evidence" value="ECO:0007669"/>
    <property type="project" value="Ensembl"/>
</dbReference>
<dbReference type="GO" id="GO:0009615">
    <property type="term" value="P:response to virus"/>
    <property type="evidence" value="ECO:0000304"/>
    <property type="project" value="ProtInc"/>
</dbReference>
<dbReference type="GO" id="GO:0007165">
    <property type="term" value="P:signal transduction"/>
    <property type="evidence" value="ECO:0000304"/>
    <property type="project" value="ProtInc"/>
</dbReference>
<dbReference type="GO" id="GO:0022029">
    <property type="term" value="P:telencephalon cell migration"/>
    <property type="evidence" value="ECO:0007669"/>
    <property type="project" value="Ensembl"/>
</dbReference>
<dbReference type="CDD" id="cd00273">
    <property type="entry name" value="Chemokine_CXC"/>
    <property type="match status" value="1"/>
</dbReference>
<dbReference type="FunFam" id="2.40.50.40:FF:000010">
    <property type="entry name" value="Stromal cell-derived factor 1 precursor"/>
    <property type="match status" value="1"/>
</dbReference>
<dbReference type="Gene3D" id="2.40.50.40">
    <property type="match status" value="1"/>
</dbReference>
<dbReference type="InterPro" id="IPR039809">
    <property type="entry name" value="Chemokine_b/g/d"/>
</dbReference>
<dbReference type="InterPro" id="IPR001811">
    <property type="entry name" value="Chemokine_IL8-like_dom"/>
</dbReference>
<dbReference type="InterPro" id="IPR033899">
    <property type="entry name" value="CXC_Chemokine_domain"/>
</dbReference>
<dbReference type="InterPro" id="IPR036048">
    <property type="entry name" value="Interleukin_8-like_sf"/>
</dbReference>
<dbReference type="PANTHER" id="PTHR12015">
    <property type="entry name" value="SMALL INDUCIBLE CYTOKINE A"/>
    <property type="match status" value="1"/>
</dbReference>
<dbReference type="PANTHER" id="PTHR12015:SF193">
    <property type="entry name" value="STROMAL CELL-DERIVED FACTOR 1"/>
    <property type="match status" value="1"/>
</dbReference>
<dbReference type="Pfam" id="PF00048">
    <property type="entry name" value="IL8"/>
    <property type="match status" value="1"/>
</dbReference>
<dbReference type="PRINTS" id="PR00436">
    <property type="entry name" value="INTERLEUKIN8"/>
</dbReference>
<dbReference type="SMART" id="SM00199">
    <property type="entry name" value="SCY"/>
    <property type="match status" value="1"/>
</dbReference>
<dbReference type="SUPFAM" id="SSF54117">
    <property type="entry name" value="Interleukin 8-like chemokines"/>
    <property type="match status" value="1"/>
</dbReference>
<protein>
    <recommendedName>
        <fullName>Stromal cell-derived factor 1</fullName>
        <shortName>SDF-1</shortName>
        <shortName>hSDF-1</shortName>
    </recommendedName>
    <alternativeName>
        <fullName>C-X-C motif chemokine 12</fullName>
    </alternativeName>
    <alternativeName>
        <fullName>Intercrine reduced in hepatomas</fullName>
        <shortName>IRH</shortName>
        <shortName>hIRH</shortName>
    </alternativeName>
    <alternativeName>
        <fullName>Pre-B cell growth-stimulating factor</fullName>
        <shortName>PBSF</shortName>
    </alternativeName>
    <component>
        <recommendedName>
            <fullName>SDF-1-beta(3-72)</fullName>
        </recommendedName>
    </component>
    <component>
        <recommendedName>
            <fullName>SDF-1-alpha(3-67)</fullName>
        </recommendedName>
    </component>
</protein>
<keyword id="KW-0002">3D-structure</keyword>
<keyword id="KW-0025">Alternative splicing</keyword>
<keyword id="KW-0145">Chemotaxis</keyword>
<keyword id="KW-0202">Cytokine</keyword>
<keyword id="KW-1015">Disulfide bond</keyword>
<keyword id="KW-0339">Growth factor</keyword>
<keyword id="KW-0945">Host-virus interaction</keyword>
<keyword id="KW-1267">Proteomics identification</keyword>
<keyword id="KW-1185">Reference proteome</keyword>
<keyword id="KW-0964">Secreted</keyword>
<keyword id="KW-0732">Signal</keyword>
<sequence length="93" mass="10666">MNAKVVVVLVLVLTALCLSDGKPVSLSYRCPCRFFESHVARANVKHLKILNTPNCALQIVARLKNNNRQVCIDPKLKWIQEYLEKALNKRFKM</sequence>
<evidence type="ECO:0000250" key="1">
    <source>
        <dbReference type="UniProtKB" id="P40224"/>
    </source>
</evidence>
<evidence type="ECO:0000255" key="2"/>
<evidence type="ECO:0000269" key="3">
    <source>
    </source>
</evidence>
<evidence type="ECO:0000269" key="4">
    <source>
    </source>
</evidence>
<evidence type="ECO:0000269" key="5">
    <source>
    </source>
</evidence>
<evidence type="ECO:0000269" key="6">
    <source>
    </source>
</evidence>
<evidence type="ECO:0000269" key="7">
    <source>
    </source>
</evidence>
<evidence type="ECO:0000269" key="8">
    <source>
    </source>
</evidence>
<evidence type="ECO:0000269" key="9">
    <source>
    </source>
</evidence>
<evidence type="ECO:0000269" key="10">
    <source>
    </source>
</evidence>
<evidence type="ECO:0000269" key="11">
    <source>
    </source>
</evidence>
<evidence type="ECO:0000269" key="12">
    <source>
    </source>
</evidence>
<evidence type="ECO:0000269" key="13">
    <source>
    </source>
</evidence>
<evidence type="ECO:0000269" key="14">
    <source>
    </source>
</evidence>
<evidence type="ECO:0000269" key="15">
    <source>
    </source>
</evidence>
<evidence type="ECO:0000269" key="16">
    <source>
    </source>
</evidence>
<evidence type="ECO:0000269" key="17">
    <source>
    </source>
</evidence>
<evidence type="ECO:0000269" key="18">
    <source>
    </source>
</evidence>
<evidence type="ECO:0000269" key="19">
    <source>
    </source>
</evidence>
<evidence type="ECO:0000269" key="20">
    <source>
    </source>
</evidence>
<evidence type="ECO:0000269" key="21">
    <source>
    </source>
</evidence>
<evidence type="ECO:0000269" key="22">
    <source>
    </source>
</evidence>
<evidence type="ECO:0000303" key="23">
    <source>
    </source>
</evidence>
<evidence type="ECO:0000303" key="24">
    <source>
    </source>
</evidence>
<evidence type="ECO:0000303" key="25">
    <source>
    </source>
</evidence>
<evidence type="ECO:0000303" key="26">
    <source>
    </source>
</evidence>
<evidence type="ECO:0000303" key="27">
    <source>
    </source>
</evidence>
<evidence type="ECO:0000303" key="28">
    <source ref="4"/>
</evidence>
<evidence type="ECO:0000303" key="29">
    <source ref="5"/>
</evidence>
<evidence type="ECO:0000303" key="30">
    <source ref="6"/>
</evidence>
<evidence type="ECO:0000303" key="31">
    <source ref="7"/>
</evidence>
<evidence type="ECO:0000305" key="32"/>
<evidence type="ECO:0007829" key="33">
    <source>
        <dbReference type="PDB" id="1QG7"/>
    </source>
</evidence>
<evidence type="ECO:0007829" key="34">
    <source>
        <dbReference type="PDB" id="1VMC"/>
    </source>
</evidence>
<evidence type="ECO:0007829" key="35">
    <source>
        <dbReference type="PDB" id="2K01"/>
    </source>
</evidence>
<evidence type="ECO:0007829" key="36">
    <source>
        <dbReference type="PDB" id="3GV3"/>
    </source>
</evidence>
<evidence type="ECO:0007829" key="37">
    <source>
        <dbReference type="PDB" id="3HP3"/>
    </source>
</evidence>
<evidence type="ECO:0007829" key="38">
    <source>
        <dbReference type="PDB" id="4UAI"/>
    </source>
</evidence>
<comment type="function">
    <text evidence="1 5 6 9 15 16 19 20">Chemoattractant active on T-lymphocytes and monocytes but not neutrophils. Activates the C-X-C chemokine receptor CXCR4 to induce a rapid and transient rise in the level of intracellular calcium ions and chemotaxis. SDF-1-beta(3-72) and SDF-1-alpha(3-67) show a reduced chemotactic activity. Binding to cell surface proteoglycans seems to inhibit formation of SDF-1-alpha(3-67) and thus to preserve activity on local sites. Also binds to atypical chemokine receptor ACKR3, which activates the beta-arrestin pathway and acts as a scavenger receptor for SDF-1. Binds to the allosteric site (site 2) of integrins and activates integrins ITGAV:ITGB3, ITGA4:ITGB1 and ITGA5:ITGB1 in a CXCR4-independent manner (PubMed:29301984). Acts as a positive regulator of monocyte migration and a negative regulator of monocyte adhesion via the LYN kinase. Stimulates migration of monocytes and T-lymphocytes through its receptors, CXCR4 and ACKR3, and decreases monocyte adherence to surfaces coated with ICAM-1, a ligand for beta-2 integrins. SDF1A/CXCR4 signaling axis inhibits beta-2 integrin LFA-1 mediated adhesion of monocytes to ICAM-1 through LYN kinase. Inhibits CXCR4-mediated infection by T-cell line-adapted HIV-1. Plays a protective role after myocardial infarction. Induces down-regulation and internalization of ACKR3 expressed in various cells. Has several critical functions during embryonic development; required for B-cell lymphopoiesis, myelopoiesis in bone marrow and heart ventricular septum formation. Stimulates the proliferation of bone marrow-derived B-cell progenitors in the presence of IL7 as well as growth of stromal cell-dependent pre-B-cells (By similarity).</text>
</comment>
<comment type="subunit">
    <text evidence="3 9 11 12 14 16 18 19 22">Monomer or homodimer; in equilibrium. Dimer formation is induced by non acidic pH and the presence of multivalent anions, and by binding to CXCR4 or heparin. Monomeric form is required for full chemotactic activity and resistance to ischemia/reperfusion injury, whereas the dimeric form acts as a partial agonist of CXCR4, stimulating Ca2+ mobilization but with no chemotactic activity and instead acts as a selective antagonist that blocks chemotaxis induced by the monomeric form. Interacts with the N-terminus of ACKR3. Interacts with integrin subunit ITGB3 (via the allosteric site (site 2)) (PubMed:29301984). Interacts with TNFAIP6 (via Link domain).</text>
</comment>
<comment type="subunit">
    <text evidence="17">(Microbial infection) Interacts with molluscum contagiosum virus protein MC148.</text>
</comment>
<comment type="interaction">
    <interactant intactId="EBI-3913254">
        <id>P48061</id>
    </interactant>
    <interactant intactId="EBI-727357">
        <id>P51671</id>
        <label>CCL11</label>
    </interactant>
    <organismsDiffer>false</organismsDiffer>
    <experiments>2</experiments>
</comment>
<comment type="interaction">
    <interactant intactId="EBI-3913254">
        <id>P48061</id>
    </interactant>
    <interactant intactId="EBI-725342">
        <id>Q99616</id>
        <label>CCL13</label>
    </interactant>
    <organismsDiffer>false</organismsDiffer>
    <experiments>2</experiments>
</comment>
<comment type="interaction">
    <interactant intactId="EBI-3913254">
        <id>P48061</id>
    </interactant>
    <interactant intactId="EBI-3913209">
        <id>P78556</id>
        <label>CCL20</label>
    </interactant>
    <organismsDiffer>false</organismsDiffer>
    <experiments>2</experiments>
</comment>
<comment type="interaction">
    <interactant intactId="EBI-3913254">
        <id>P48061</id>
    </interactant>
    <interactant intactId="EBI-953695">
        <id>O00585</id>
        <label>CCL21</label>
    </interactant>
    <organismsDiffer>false</organismsDiffer>
    <experiments>2</experiments>
</comment>
<comment type="interaction">
    <interactant intactId="EBI-3913254">
        <id>P48061</id>
    </interactant>
    <interactant intactId="EBI-7783341">
        <id>O15444</id>
        <label>CCL25</label>
    </interactant>
    <organismsDiffer>false</organismsDiffer>
    <experiments>2</experiments>
</comment>
<comment type="interaction">
    <interactant intactId="EBI-3913254">
        <id>P48061</id>
    </interactant>
    <interactant intactId="EBI-7783416">
        <id>Q9Y258</id>
        <label>CCL26</label>
    </interactant>
    <organismsDiffer>false</organismsDiffer>
    <experiments>2</experiments>
</comment>
<comment type="interaction">
    <interactant intactId="EBI-3913254">
        <id>P48061</id>
    </interactant>
    <interactant intactId="EBI-7783254">
        <id>Q9NRJ3</id>
        <label>CCL28</label>
    </interactant>
    <organismsDiffer>false</organismsDiffer>
    <experiments>2</experiments>
</comment>
<comment type="interaction">
    <interactant intactId="EBI-3913254">
        <id>P48061</id>
    </interactant>
    <interactant intactId="EBI-2848366">
        <id>P13501</id>
        <label>CCL5</label>
    </interactant>
    <organismsDiffer>false</organismsDiffer>
    <experiments>5</experiments>
</comment>
<comment type="interaction">
    <interactant intactId="EBI-3913254">
        <id>P48061</id>
    </interactant>
    <interactant intactId="EBI-11712923">
        <id>PRO_0000005175</id>
        <label>CCL5</label>
        <dbReference type="UniProtKB" id="P13501"/>
    </interactant>
    <organismsDiffer>false</organismsDiffer>
    <experiments>2</experiments>
</comment>
<comment type="interaction">
    <interactant intactId="EBI-3913254">
        <id>P48061</id>
    </interactant>
    <interactant intactId="EBI-7815386">
        <id>P02778</id>
        <label>CXCL10</label>
    </interactant>
    <organismsDiffer>false</organismsDiffer>
    <experiments>2</experiments>
</comment>
<comment type="interaction">
    <interactant intactId="EBI-3913254">
        <id>P48061</id>
    </interactant>
    <interactant intactId="EBI-2871971">
        <id>O14625</id>
        <label>CXCL11</label>
    </interactant>
    <organismsDiffer>false</organismsDiffer>
    <experiments>3</experiments>
</comment>
<comment type="interaction">
    <interactant intactId="EBI-3913254">
        <id>P48061</id>
    </interactant>
    <interactant intactId="EBI-2798068">
        <id>O95715</id>
        <label>CXCL14</label>
    </interactant>
    <organismsDiffer>false</organismsDiffer>
    <experiments>2</experiments>
</comment>
<comment type="interaction">
    <interactant intactId="EBI-3913254">
        <id>P48061</id>
    </interactant>
    <interactant intactId="EBI-16804198">
        <id>Q6UXB2</id>
        <label>CXCL17</label>
    </interactant>
    <organismsDiffer>false</organismsDiffer>
    <experiments>2</experiments>
</comment>
<comment type="interaction">
    <interactant intactId="EBI-3913254">
        <id>P48061</id>
    </interactant>
    <interactant intactId="EBI-2114901">
        <id>P19875</id>
        <label>CXCL2</label>
    </interactant>
    <organismsDiffer>false</organismsDiffer>
    <experiments>2</experiments>
</comment>
<comment type="interaction">
    <interactant intactId="EBI-3913254">
        <id>P48061</id>
    </interactant>
    <interactant intactId="EBI-9214033">
        <id>P80162</id>
        <label>CXCL6</label>
    </interactant>
    <organismsDiffer>false</organismsDiffer>
    <experiments>2</experiments>
</comment>
<comment type="interaction">
    <interactant intactId="EBI-3913254">
        <id>P48061</id>
    </interactant>
    <interactant intactId="EBI-3911467">
        <id>Q07325</id>
        <label>CXCL9</label>
    </interactant>
    <organismsDiffer>false</organismsDiffer>
    <experiments>2</experiments>
</comment>
<comment type="interaction">
    <interactant intactId="EBI-3913254">
        <id>P48061</id>
    </interactant>
    <interactant intactId="EBI-2565740">
        <id>P02776</id>
        <label>PF4</label>
    </interactant>
    <organismsDiffer>false</organismsDiffer>
    <experiments>4</experiments>
</comment>
<comment type="interaction">
    <interactant intactId="EBI-3913254">
        <id>P48061</id>
    </interactant>
    <interactant intactId="EBI-1223944">
        <id>P10720</id>
        <label>PF4V1</label>
    </interactant>
    <organismsDiffer>false</organismsDiffer>
    <experiments>4</experiments>
</comment>
<comment type="interaction">
    <interactant intactId="EBI-3913254">
        <id>P48061</id>
    </interactant>
    <interactant intactId="EBI-10209901">
        <id>P47992</id>
        <label>XCL1</label>
    </interactant>
    <organismsDiffer>false</organismsDiffer>
    <experiments>2</experiments>
</comment>
<comment type="interaction">
    <interactant intactId="EBI-3913254">
        <id>P48061</id>
    </interactant>
    <interactant intactId="EBI-10319095">
        <id>Q9UBD3</id>
        <label>XCL2</label>
    </interactant>
    <organismsDiffer>false</organismsDiffer>
    <experiments>2</experiments>
</comment>
<comment type="subcellular location">
    <subcellularLocation>
        <location>Secreted</location>
    </subcellularLocation>
</comment>
<comment type="alternative products">
    <event type="alternative splicing"/>
    <isoform>
        <id>P48061-1</id>
        <name>Beta</name>
        <name>SDF-1-beta(1-72)</name>
        <name>hSDF-1beta</name>
        <sequence type="displayed"/>
    </isoform>
    <isoform>
        <id>P48061-2</id>
        <name>Alpha</name>
        <name>SDF-1-alpha(1-68)</name>
        <name>hSDF-1alpha</name>
        <sequence type="described" ref="VSP_001056"/>
    </isoform>
    <isoform>
        <id>P48061-3</id>
        <name>Gamma</name>
        <name>hSDF-1gamma</name>
        <name>SDF-1g</name>
        <sequence type="described" ref="VSP_041209"/>
    </isoform>
    <isoform>
        <id>P48061-4</id>
        <name>Delta</name>
        <name>hSDF-1delta</name>
        <sequence type="described" ref="VSP_042118"/>
    </isoform>
    <isoform>
        <id>P48061-5</id>
        <name>Epsilon</name>
        <name>hSDFepsilon</name>
        <sequence type="described" ref="VSP_042119"/>
    </isoform>
    <isoform>
        <id>P48061-6</id>
        <name>Theta</name>
        <name>hSDFphi</name>
        <name>hSDFtheta</name>
        <name>Phi</name>
        <sequence type="described" ref="VSP_042120"/>
    </isoform>
    <isoform>
        <id>P48061-7</id>
        <name>7</name>
        <sequence type="described" ref="VSP_054781"/>
    </isoform>
</comment>
<comment type="tissue specificity">
    <text evidence="10">Isoform Alpha and isoform Beta are ubiquitously expressed, with highest levels detected in liver, pancreas and spleen. Isoform Gamma is mainly expressed in heart, with weak expression detected in several other tissues. Isoform Delta, isoform Epsilon and isoform Theta have highest expression levels in pancreas, with lower levels detected in heart, kidney, liver and spleen.</text>
</comment>
<comment type="developmental stage">
    <text evidence="10">Isoform Alpha is ubiquitously expressed in fetal tissues. Isoform Beta and isoform Delta have more limited expression patterns, with highest levels detected in fetal spleen and fetal liver, respectively. Isoform Gamma and isoform Theta are weakly detected in fetal kidney.</text>
</comment>
<comment type="PTM">
    <text evidence="7">Processed forms SDF-1-beta(3-72) and SDF-1-alpha(3-67) are produced after secretion by proteolytic cleavage of isoforms Beta and Alpha, respectively. The N-terminal processing is probably achieved by DPP4. Isoform Alpha is first cleaved at the C-terminus to yield a SDF-1-alpha(1-67) intermediate before being processed at the N-terminus. The C-terminal processing of isoform Alpha is reduced by binding to heparin and, probably, cell surface proteoglycans.</text>
</comment>
<comment type="mass spectrometry" mass="7959.0" method="Electrospray" evidence="7">
    <molecule>Isoform Alpha</molecule>
    <text>The measured range is 22-89.</text>
</comment>
<comment type="mass spectrometry" mass="7606.0" method="Electrospray" evidence="7">
    <molecule>Isoform Alpha</molecule>
    <text>The measured range is 24-88.</text>
</comment>
<comment type="mass spectrometry" mass="8522.0" method="Electrospray" evidence="7">
    <molecule>Isoform Beta</molecule>
    <text>The measured range is 22-93.</text>
</comment>
<comment type="mass spectrometry" mass="8297.0" method="Electrospray" evidence="7">
    <molecule>Isoform Beta</molecule>
    <text>The measured range is 24-93.</text>
</comment>
<comment type="similarity">
    <text evidence="32">Belongs to the intercrine alpha (chemokine CxC) family.</text>
</comment>
<comment type="online information" name="Wikipedia">
    <link uri="https://en.wikipedia.org/wiki/SDF-1_%28biology%29"/>
    <text>SDF-1 entry</text>
</comment>
<gene>
    <name type="primary">CXCL12</name>
    <name type="synonym">SDF1</name>
    <name type="synonym">SDF1A</name>
    <name type="synonym">SDF1B</name>
</gene>